<reference key="1">
    <citation type="journal article" date="1995" name="J. Biol. Chem.">
        <title>Phenylalkylamine Ca2+ antagonist binding protein. Molecular cloning, tissue distribution, and heterologous expression.</title>
        <authorList>
            <person name="Hanner M."/>
            <person name="Moebius F.F."/>
            <person name="Weber F."/>
            <person name="Grabner M."/>
            <person name="Striessnig J."/>
            <person name="Glossmann H."/>
        </authorList>
    </citation>
    <scope>NUCLEOTIDE SEQUENCE [MRNA]</scope>
    <source>
        <tissue>Liver</tissue>
    </source>
</reference>
<reference key="2">
    <citation type="submission" date="2004-06" db="EMBL/GenBank/DDBJ databases">
        <title>Cloning of human full open reading frames in Gateway(TM) system entry vector (pDONR201).</title>
        <authorList>
            <person name="Ebert L."/>
            <person name="Schick M."/>
            <person name="Neubert P."/>
            <person name="Schatten R."/>
            <person name="Henze S."/>
            <person name="Korn B."/>
        </authorList>
    </citation>
    <scope>NUCLEOTIDE SEQUENCE [LARGE SCALE MRNA]</scope>
</reference>
<reference key="3">
    <citation type="journal article" date="2005" name="Nature">
        <title>The DNA sequence of the human X chromosome.</title>
        <authorList>
            <person name="Ross M.T."/>
            <person name="Grafham D.V."/>
            <person name="Coffey A.J."/>
            <person name="Scherer S."/>
            <person name="McLay K."/>
            <person name="Muzny D."/>
            <person name="Platzer M."/>
            <person name="Howell G.R."/>
            <person name="Burrows C."/>
            <person name="Bird C.P."/>
            <person name="Frankish A."/>
            <person name="Lovell F.L."/>
            <person name="Howe K.L."/>
            <person name="Ashurst J.L."/>
            <person name="Fulton R.S."/>
            <person name="Sudbrak R."/>
            <person name="Wen G."/>
            <person name="Jones M.C."/>
            <person name="Hurles M.E."/>
            <person name="Andrews T.D."/>
            <person name="Scott C.E."/>
            <person name="Searle S."/>
            <person name="Ramser J."/>
            <person name="Whittaker A."/>
            <person name="Deadman R."/>
            <person name="Carter N.P."/>
            <person name="Hunt S.E."/>
            <person name="Chen R."/>
            <person name="Cree A."/>
            <person name="Gunaratne P."/>
            <person name="Havlak P."/>
            <person name="Hodgson A."/>
            <person name="Metzker M.L."/>
            <person name="Richards S."/>
            <person name="Scott G."/>
            <person name="Steffen D."/>
            <person name="Sodergren E."/>
            <person name="Wheeler D.A."/>
            <person name="Worley K.C."/>
            <person name="Ainscough R."/>
            <person name="Ambrose K.D."/>
            <person name="Ansari-Lari M.A."/>
            <person name="Aradhya S."/>
            <person name="Ashwell R.I."/>
            <person name="Babbage A.K."/>
            <person name="Bagguley C.L."/>
            <person name="Ballabio A."/>
            <person name="Banerjee R."/>
            <person name="Barker G.E."/>
            <person name="Barlow K.F."/>
            <person name="Barrett I.P."/>
            <person name="Bates K.N."/>
            <person name="Beare D.M."/>
            <person name="Beasley H."/>
            <person name="Beasley O."/>
            <person name="Beck A."/>
            <person name="Bethel G."/>
            <person name="Blechschmidt K."/>
            <person name="Brady N."/>
            <person name="Bray-Allen S."/>
            <person name="Bridgeman A.M."/>
            <person name="Brown A.J."/>
            <person name="Brown M.J."/>
            <person name="Bonnin D."/>
            <person name="Bruford E.A."/>
            <person name="Buhay C."/>
            <person name="Burch P."/>
            <person name="Burford D."/>
            <person name="Burgess J."/>
            <person name="Burrill W."/>
            <person name="Burton J."/>
            <person name="Bye J.M."/>
            <person name="Carder C."/>
            <person name="Carrel L."/>
            <person name="Chako J."/>
            <person name="Chapman J.C."/>
            <person name="Chavez D."/>
            <person name="Chen E."/>
            <person name="Chen G."/>
            <person name="Chen Y."/>
            <person name="Chen Z."/>
            <person name="Chinault C."/>
            <person name="Ciccodicola A."/>
            <person name="Clark S.Y."/>
            <person name="Clarke G."/>
            <person name="Clee C.M."/>
            <person name="Clegg S."/>
            <person name="Clerc-Blankenburg K."/>
            <person name="Clifford K."/>
            <person name="Cobley V."/>
            <person name="Cole C.G."/>
            <person name="Conquer J.S."/>
            <person name="Corby N."/>
            <person name="Connor R.E."/>
            <person name="David R."/>
            <person name="Davies J."/>
            <person name="Davis C."/>
            <person name="Davis J."/>
            <person name="Delgado O."/>
            <person name="Deshazo D."/>
            <person name="Dhami P."/>
            <person name="Ding Y."/>
            <person name="Dinh H."/>
            <person name="Dodsworth S."/>
            <person name="Draper H."/>
            <person name="Dugan-Rocha S."/>
            <person name="Dunham A."/>
            <person name="Dunn M."/>
            <person name="Durbin K.J."/>
            <person name="Dutta I."/>
            <person name="Eades T."/>
            <person name="Ellwood M."/>
            <person name="Emery-Cohen A."/>
            <person name="Errington H."/>
            <person name="Evans K.L."/>
            <person name="Faulkner L."/>
            <person name="Francis F."/>
            <person name="Frankland J."/>
            <person name="Fraser A.E."/>
            <person name="Galgoczy P."/>
            <person name="Gilbert J."/>
            <person name="Gill R."/>
            <person name="Gloeckner G."/>
            <person name="Gregory S.G."/>
            <person name="Gribble S."/>
            <person name="Griffiths C."/>
            <person name="Grocock R."/>
            <person name="Gu Y."/>
            <person name="Gwilliam R."/>
            <person name="Hamilton C."/>
            <person name="Hart E.A."/>
            <person name="Hawes A."/>
            <person name="Heath P.D."/>
            <person name="Heitmann K."/>
            <person name="Hennig S."/>
            <person name="Hernandez J."/>
            <person name="Hinzmann B."/>
            <person name="Ho S."/>
            <person name="Hoffs M."/>
            <person name="Howden P.J."/>
            <person name="Huckle E.J."/>
            <person name="Hume J."/>
            <person name="Hunt P.J."/>
            <person name="Hunt A.R."/>
            <person name="Isherwood J."/>
            <person name="Jacob L."/>
            <person name="Johnson D."/>
            <person name="Jones S."/>
            <person name="de Jong P.J."/>
            <person name="Joseph S.S."/>
            <person name="Keenan S."/>
            <person name="Kelly S."/>
            <person name="Kershaw J.K."/>
            <person name="Khan Z."/>
            <person name="Kioschis P."/>
            <person name="Klages S."/>
            <person name="Knights A.J."/>
            <person name="Kosiura A."/>
            <person name="Kovar-Smith C."/>
            <person name="Laird G.K."/>
            <person name="Langford C."/>
            <person name="Lawlor S."/>
            <person name="Leversha M."/>
            <person name="Lewis L."/>
            <person name="Liu W."/>
            <person name="Lloyd C."/>
            <person name="Lloyd D.M."/>
            <person name="Loulseged H."/>
            <person name="Loveland J.E."/>
            <person name="Lovell J.D."/>
            <person name="Lozado R."/>
            <person name="Lu J."/>
            <person name="Lyne R."/>
            <person name="Ma J."/>
            <person name="Maheshwari M."/>
            <person name="Matthews L.H."/>
            <person name="McDowall J."/>
            <person name="McLaren S."/>
            <person name="McMurray A."/>
            <person name="Meidl P."/>
            <person name="Meitinger T."/>
            <person name="Milne S."/>
            <person name="Miner G."/>
            <person name="Mistry S.L."/>
            <person name="Morgan M."/>
            <person name="Morris S."/>
            <person name="Mueller I."/>
            <person name="Mullikin J.C."/>
            <person name="Nguyen N."/>
            <person name="Nordsiek G."/>
            <person name="Nyakatura G."/>
            <person name="O'dell C.N."/>
            <person name="Okwuonu G."/>
            <person name="Palmer S."/>
            <person name="Pandian R."/>
            <person name="Parker D."/>
            <person name="Parrish J."/>
            <person name="Pasternak S."/>
            <person name="Patel D."/>
            <person name="Pearce A.V."/>
            <person name="Pearson D.M."/>
            <person name="Pelan S.E."/>
            <person name="Perez L."/>
            <person name="Porter K.M."/>
            <person name="Ramsey Y."/>
            <person name="Reichwald K."/>
            <person name="Rhodes S."/>
            <person name="Ridler K.A."/>
            <person name="Schlessinger D."/>
            <person name="Schueler M.G."/>
            <person name="Sehra H.K."/>
            <person name="Shaw-Smith C."/>
            <person name="Shen H."/>
            <person name="Sheridan E.M."/>
            <person name="Shownkeen R."/>
            <person name="Skuce C.D."/>
            <person name="Smith M.L."/>
            <person name="Sotheran E.C."/>
            <person name="Steingruber H.E."/>
            <person name="Steward C.A."/>
            <person name="Storey R."/>
            <person name="Swann R.M."/>
            <person name="Swarbreck D."/>
            <person name="Tabor P.E."/>
            <person name="Taudien S."/>
            <person name="Taylor T."/>
            <person name="Teague B."/>
            <person name="Thomas K."/>
            <person name="Thorpe A."/>
            <person name="Timms K."/>
            <person name="Tracey A."/>
            <person name="Trevanion S."/>
            <person name="Tromans A.C."/>
            <person name="d'Urso M."/>
            <person name="Verduzco D."/>
            <person name="Villasana D."/>
            <person name="Waldron L."/>
            <person name="Wall M."/>
            <person name="Wang Q."/>
            <person name="Warren J."/>
            <person name="Warry G.L."/>
            <person name="Wei X."/>
            <person name="West A."/>
            <person name="Whitehead S.L."/>
            <person name="Whiteley M.N."/>
            <person name="Wilkinson J.E."/>
            <person name="Willey D.L."/>
            <person name="Williams G."/>
            <person name="Williams L."/>
            <person name="Williamson A."/>
            <person name="Williamson H."/>
            <person name="Wilming L."/>
            <person name="Woodmansey R.L."/>
            <person name="Wray P.W."/>
            <person name="Yen J."/>
            <person name="Zhang J."/>
            <person name="Zhou J."/>
            <person name="Zoghbi H."/>
            <person name="Zorilla S."/>
            <person name="Buck D."/>
            <person name="Reinhardt R."/>
            <person name="Poustka A."/>
            <person name="Rosenthal A."/>
            <person name="Lehrach H."/>
            <person name="Meindl A."/>
            <person name="Minx P.J."/>
            <person name="Hillier L.W."/>
            <person name="Willard H.F."/>
            <person name="Wilson R.K."/>
            <person name="Waterston R.H."/>
            <person name="Rice C.M."/>
            <person name="Vaudin M."/>
            <person name="Coulson A."/>
            <person name="Nelson D.L."/>
            <person name="Weinstock G."/>
            <person name="Sulston J.E."/>
            <person name="Durbin R.M."/>
            <person name="Hubbard T."/>
            <person name="Gibbs R.A."/>
            <person name="Beck S."/>
            <person name="Rogers J."/>
            <person name="Bentley D.R."/>
        </authorList>
    </citation>
    <scope>NUCLEOTIDE SEQUENCE [LARGE SCALE GENOMIC DNA]</scope>
</reference>
<reference key="4">
    <citation type="submission" date="2005-07" db="EMBL/GenBank/DDBJ databases">
        <authorList>
            <person name="Mural R.J."/>
            <person name="Istrail S."/>
            <person name="Sutton G.G."/>
            <person name="Florea L."/>
            <person name="Halpern A.L."/>
            <person name="Mobarry C.M."/>
            <person name="Lippert R."/>
            <person name="Walenz B."/>
            <person name="Shatkay H."/>
            <person name="Dew I."/>
            <person name="Miller J.R."/>
            <person name="Flanigan M.J."/>
            <person name="Edwards N.J."/>
            <person name="Bolanos R."/>
            <person name="Fasulo D."/>
            <person name="Halldorsson B.V."/>
            <person name="Hannenhalli S."/>
            <person name="Turner R."/>
            <person name="Yooseph S."/>
            <person name="Lu F."/>
            <person name="Nusskern D.R."/>
            <person name="Shue B.C."/>
            <person name="Zheng X.H."/>
            <person name="Zhong F."/>
            <person name="Delcher A.L."/>
            <person name="Huson D.H."/>
            <person name="Kravitz S.A."/>
            <person name="Mouchard L."/>
            <person name="Reinert K."/>
            <person name="Remington K.A."/>
            <person name="Clark A.G."/>
            <person name="Waterman M.S."/>
            <person name="Eichler E.E."/>
            <person name="Adams M.D."/>
            <person name="Hunkapiller M.W."/>
            <person name="Myers E.W."/>
            <person name="Venter J.C."/>
        </authorList>
    </citation>
    <scope>NUCLEOTIDE SEQUENCE [LARGE SCALE GENOMIC DNA]</scope>
</reference>
<reference key="5">
    <citation type="journal article" date="2004" name="Genome Res.">
        <title>The status, quality, and expansion of the NIH full-length cDNA project: the Mammalian Gene Collection (MGC).</title>
        <authorList>
            <consortium name="The MGC Project Team"/>
        </authorList>
    </citation>
    <scope>NUCLEOTIDE SEQUENCE [LARGE SCALE MRNA]</scope>
    <source>
        <tissue>Cervix</tissue>
        <tissue>Placenta</tissue>
    </source>
</reference>
<reference key="6">
    <citation type="journal article" date="1996" name="J. Biol. Chem.">
        <title>Emopamil-binding protein, a mammalian protein that binds a series of structurally diverse neuroprotective agents, exhibits delta8-delta7 sterol isomerase activity in yeast.</title>
        <authorList>
            <person name="Silve S."/>
            <person name="Dupuy P.H."/>
            <person name="Labit-Lebouteiller C."/>
            <person name="Kaghad M."/>
            <person name="Chalon P."/>
            <person name="Rahier A."/>
            <person name="Taton M."/>
            <person name="Lupker J."/>
            <person name="Shire D."/>
            <person name="Loison G."/>
        </authorList>
    </citation>
    <scope>CATALYTIC ACTIVITY</scope>
    <scope>FUNCTION</scope>
    <scope>PATHWAY</scope>
</reference>
<reference key="7">
    <citation type="journal article" date="1999" name="Biochemistry">
        <title>Histidine77, glutamic acid81, glutamic acid123, threonine126, asparagine194, and tryptophan197 of the human emopamil binding protein are required for in vivo sterol delta 8-delta 7 isomerization.</title>
        <authorList>
            <person name="Moebius F.F."/>
            <person name="Soellner K.E.M."/>
            <person name="Fiechtner B."/>
            <person name="Huck C.W."/>
            <person name="Bonn G."/>
            <person name="Glossmann H."/>
        </authorList>
    </citation>
    <scope>CATALYTIC ACTIVITY</scope>
    <scope>FUNCTION</scope>
    <scope>PATHWAY</scope>
    <scope>MUTAGENESIS</scope>
</reference>
<reference key="8">
    <citation type="journal article" date="1999" name="Eur. J. Biochem.">
        <title>Colocalization of sterol isomerase and sigma(1) receptor at endoplasmic reticulum and nuclear envelope level.</title>
        <authorList>
            <person name="Dussossoy D."/>
            <person name="Carayon P."/>
            <person name="Belugou S."/>
            <person name="Feraut D."/>
            <person name="Bord A."/>
            <person name="Goubet C."/>
            <person name="Roque C."/>
            <person name="Vidal H."/>
            <person name="Combes T."/>
            <person name="Loison G."/>
            <person name="Casellas P."/>
        </authorList>
    </citation>
    <scope>SUBCELLULAR LOCATION</scope>
</reference>
<reference key="9">
    <citation type="journal article" date="2003" name="Am. J. Med. Genet. A">
        <title>Molecular, biochemical, and phenotypic analysis of a hemizygous male with a severe atypical phenotype for X-linked dominant Conradi-Hunermann-Happle syndrome and a mutation in EBP.</title>
        <authorList>
            <person name="Milunsky J.M."/>
            <person name="Maher T.A."/>
            <person name="Metzenberg A.B."/>
        </authorList>
    </citation>
    <scope>INVOLVEMENT IN MEND</scope>
    <scope>VARIANT MEND PRO-18</scope>
    <scope>CHARACTERIZATION OF VARIANT MEND PRO-18</scope>
</reference>
<reference key="10">
    <citation type="journal article" date="2003" name="Biochem. J.">
        <title>Cloning of an emopamil-binding protein (EBP)-like protein that lacks sterol delta8-delta7 isomerase activity.</title>
        <authorList>
            <person name="Moebius F.F."/>
            <person name="Fitzky B.U."/>
            <person name="Wietzorrek G."/>
            <person name="Haidekker A."/>
            <person name="Eder A."/>
            <person name="Glossmann H."/>
        </authorList>
    </citation>
    <scope>CATALYTIC ACTIVITY</scope>
    <scope>FUNCTION</scope>
    <scope>PATHWAY</scope>
    <scope>MUTAGENESIS OF TYR-111; MET-121 AND PHE-189</scope>
</reference>
<reference key="11">
    <citation type="journal article" date="2004" name="J. Biol. Chem.">
        <title>Molecular characterization of the microsomal tamoxifen binding site.</title>
        <authorList>
            <person name="Kedjouar B."/>
            <person name="de Medina P."/>
            <person name="Oulad-Abdelghani M."/>
            <person name="Payre B."/>
            <person name="Silvente-Poirot S."/>
            <person name="Favre G."/>
            <person name="Faye J.C."/>
            <person name="Poirot M."/>
        </authorList>
    </citation>
    <scope>FUNCTION</scope>
    <scope>ACTIVITY REGULATION</scope>
</reference>
<reference key="12">
    <citation type="journal article" date="2009" name="Science">
        <title>Lysine acetylation targets protein complexes and co-regulates major cellular functions.</title>
        <authorList>
            <person name="Choudhary C."/>
            <person name="Kumar C."/>
            <person name="Gnad F."/>
            <person name="Nielsen M.L."/>
            <person name="Rehman M."/>
            <person name="Walther T.C."/>
            <person name="Olsen J.V."/>
            <person name="Mann M."/>
        </authorList>
    </citation>
    <scope>IDENTIFICATION BY MASS SPECTROMETRY [LARGE SCALE ANALYSIS]</scope>
</reference>
<reference key="13">
    <citation type="journal article" date="2010" name="Am. J. Med. Genet. A">
        <title>A novel X-linked multiple congenital anomaly syndrome associated with an EBP mutation.</title>
        <authorList>
            <person name="Furtado L.V."/>
            <person name="Bayrak-Toydemir P."/>
            <person name="Hulinsky B."/>
            <person name="Damjanovich K."/>
            <person name="Carey J.C."/>
            <person name="Rope A.F."/>
        </authorList>
    </citation>
    <scope>INVOLVEMENT IN MEND</scope>
    <scope>VARIANT MEND CYS-47</scope>
    <scope>CHARACTERIZATION OF VARIANT MEND CYS-47</scope>
</reference>
<reference key="14">
    <citation type="journal article" date="2010" name="Proc. Natl. Acad. Sci. U.S.A.">
        <title>Identification and pharmacological characterization of cholesterol-5,6-epoxide hydrolase as a target for tamoxifen and AEBS ligands.</title>
        <authorList>
            <person name="de Medina P."/>
            <person name="Paillasse M.R."/>
            <person name="Segala G."/>
            <person name="Poirot M."/>
            <person name="Silvente-Poirot S."/>
        </authorList>
    </citation>
    <scope>FUNCTION</scope>
    <scope>CATALYTIC ACTIVITY</scope>
    <scope>ACTIVITY REGULATION</scope>
    <scope>BIOPHYSICOCHEMICAL PROPERTIES</scope>
</reference>
<reference key="15">
    <citation type="journal article" date="2011" name="BMC Syst. Biol.">
        <title>Initial characterization of the human central proteome.</title>
        <authorList>
            <person name="Burkard T.R."/>
            <person name="Planyavsky M."/>
            <person name="Kaupe I."/>
            <person name="Breitwieser F.P."/>
            <person name="Buerckstuemmer T."/>
            <person name="Bennett K.L."/>
            <person name="Superti-Furga G."/>
            <person name="Colinge J."/>
        </authorList>
    </citation>
    <scope>IDENTIFICATION BY MASS SPECTROMETRY [LARGE SCALE ANALYSIS]</scope>
</reference>
<reference key="16">
    <citation type="journal article" date="2015" name="Proteomics">
        <title>N-terminome analysis of the human mitochondrial proteome.</title>
        <authorList>
            <person name="Vaca Jacome A.S."/>
            <person name="Rabilloud T."/>
            <person name="Schaeffer-Reiss C."/>
            <person name="Rompais M."/>
            <person name="Ayoub D."/>
            <person name="Lane L."/>
            <person name="Bairoch A."/>
            <person name="Van Dorsselaer A."/>
            <person name="Carapito C."/>
        </authorList>
    </citation>
    <scope>ACETYLATION [LARGE SCALE ANALYSIS] AT THR-2</scope>
    <scope>CLEAVAGE OF INITIATOR METHIONINE [LARGE SCALE ANALYSIS]</scope>
    <scope>IDENTIFICATION BY MASS SPECTROMETRY [LARGE SCALE ANALYSIS]</scope>
</reference>
<reference key="17">
    <citation type="journal article" date="1999" name="Nat. Genet.">
        <title>Mutations in a delta(8)-delta(7) sterol isomerase in the tattered mouse and X-linked dominant chondrodysplasia punctata.</title>
        <authorList>
            <person name="Derry J.M.J."/>
            <person name="Gormally E."/>
            <person name="Means G.D."/>
            <person name="Zhao W."/>
            <person name="Meindl A."/>
            <person name="Kelley R.I."/>
            <person name="Boyd Y."/>
            <person name="Herman G.E."/>
        </authorList>
    </citation>
    <scope>VARIANT CDPX2 GLN-110</scope>
</reference>
<reference key="18">
    <citation type="journal article" date="1999" name="Nat. Genet.">
        <title>Mutations in the gene encoding 3-beta-hydroxysteroid-delta(8),delta(7)-isomerase cause X-linked dominant Conradi-Hunermann syndrome.</title>
        <authorList>
            <person name="Braverman N."/>
            <person name="Lin P."/>
            <person name="Moebius F.F."/>
            <person name="Obie C."/>
            <person name="Moser A."/>
            <person name="Glossmann H."/>
            <person name="Wilcox W.R."/>
            <person name="Rimoin D.L."/>
            <person name="Smith M."/>
            <person name="Kratz L."/>
            <person name="Kelley R.I."/>
            <person name="Valle D."/>
        </authorList>
    </citation>
    <scope>VARIANTS CDPX2 LYS-80 AND HIS-147</scope>
</reference>
<reference key="19">
    <citation type="journal article" date="2000" name="Hum. Mol. Genet.">
        <title>The Conradi-Hunermann-Happle syndrome (CDPX2) and emopamil binding protein: novel mutations, and somatic and gonadal mosaicism.</title>
        <authorList>
            <person name="Has C."/>
            <person name="Bruckner-Tuderman L."/>
            <person name="Muller D."/>
            <person name="Floeth M."/>
            <person name="Folkers E."/>
            <person name="Donnai D."/>
            <person name="Traupe H."/>
        </authorList>
    </citation>
    <scope>VARIANT CDPX2 HIS-147</scope>
</reference>
<reference key="20">
    <citation type="journal article" date="2001" name="Exp. Dermatol.">
        <title>Identification of a novel mutation in 3beta-hydroxysteroid-Delta8-Delta7-isomerase in a case of Conradi-Hunermann-Happle syndrome.</title>
        <authorList>
            <person name="Becker K."/>
            <person name="Csikos M."/>
            <person name="Horvath A."/>
            <person name="Karpati S."/>
        </authorList>
    </citation>
    <scope>VARIANT CDPX2 GLY-147</scope>
</reference>
<reference key="21">
    <citation type="journal article" date="2008" name="Acta Derm. Venereol.">
        <title>Conradi-Huenermann-Happle syndrome (X-linked dominant chondrodysplasia punctata) confirmed by plasma sterol and mutation analysis.</title>
        <authorList>
            <person name="Kolb-Maeurer A."/>
            <person name="Grzeschik K.H."/>
            <person name="Haas D."/>
            <person name="Broecker E.B."/>
            <person name="Hamm H."/>
        </authorList>
    </citation>
    <scope>VARIANT CDPX2 LYS-103</scope>
</reference>
<reference key="22">
    <citation type="journal article" date="2014" name="Am. J. Med. Genet. A">
        <title>An unusual phenotype of X-linked developmental delay and extreme behavioral difficulties associated with a mutation in the EBP gene.</title>
        <authorList>
            <person name="Hartill V.L."/>
            <person name="Tysoe C."/>
            <person name="Manning N."/>
            <person name="Dobbie A."/>
            <person name="Santra S."/>
            <person name="Walter J."/>
            <person name="Caswell R."/>
            <person name="Koster J."/>
            <person name="Waterham H."/>
            <person name="Hobson E."/>
        </authorList>
    </citation>
    <scope>VARIANT MEND ARG-47</scope>
    <scope>CHARACTERIZATION OF VARIANT MEND ARG-47</scope>
</reference>
<reference key="23">
    <citation type="journal article" date="2014" name="Am. J. Med. Genet. A">
        <title>A novel EBP c.224T&gt;A mutation supports the existence of a male-specific disorder independent of CDPX2.</title>
        <authorList>
            <person name="Barboza-Cerda M.C."/>
            <person name="Wong L.J."/>
            <person name="Martinez-de-Villarreal L.E."/>
            <person name="Zhang V.W."/>
            <person name="Dector M.A."/>
        </authorList>
    </citation>
    <scope>VARIANT MEND ASN-75</scope>
    <scope>CHARACTERIZATION OF VARIANT MEND ASN-75</scope>
</reference>
<reference key="24">
    <citation type="journal article" date="2015" name="Indian J. Dermatol.">
        <title>Emopamil binding protein mutation in conradi-huenermann-happle syndrome representing plaque-type psoriasis.</title>
        <authorList>
            <person name="Ozyurt K."/>
            <person name="Subasioglu A."/>
            <person name="Ozturk P."/>
            <person name="Inci R."/>
            <person name="Ozkan F."/>
            <person name="Bueno E."/>
            <person name="Canueto J."/>
            <person name="Gonzalez Sarmiento R."/>
        </authorList>
    </citation>
    <scope>VARIANT CDPX2 HIS-147</scope>
</reference>
<name>EBP_HUMAN</name>
<organism>
    <name type="scientific">Homo sapiens</name>
    <name type="common">Human</name>
    <dbReference type="NCBI Taxonomy" id="9606"/>
    <lineage>
        <taxon>Eukaryota</taxon>
        <taxon>Metazoa</taxon>
        <taxon>Chordata</taxon>
        <taxon>Craniata</taxon>
        <taxon>Vertebrata</taxon>
        <taxon>Euteleostomi</taxon>
        <taxon>Mammalia</taxon>
        <taxon>Eutheria</taxon>
        <taxon>Euarchontoglires</taxon>
        <taxon>Primates</taxon>
        <taxon>Haplorrhini</taxon>
        <taxon>Catarrhini</taxon>
        <taxon>Hominidae</taxon>
        <taxon>Homo</taxon>
    </lineage>
</organism>
<gene>
    <name evidence="25" type="primary">EBP</name>
</gene>
<evidence type="ECO:0000255" key="1"/>
<evidence type="ECO:0000255" key="2">
    <source>
        <dbReference type="PROSITE-ProRule" id="PRU01087"/>
    </source>
</evidence>
<evidence type="ECO:0000269" key="3">
    <source>
    </source>
</evidence>
<evidence type="ECO:0000269" key="4">
    <source>
    </source>
</evidence>
<evidence type="ECO:0000269" key="5">
    <source>
    </source>
</evidence>
<evidence type="ECO:0000269" key="6">
    <source>
    </source>
</evidence>
<evidence type="ECO:0000269" key="7">
    <source>
    </source>
</evidence>
<evidence type="ECO:0000269" key="8">
    <source>
    </source>
</evidence>
<evidence type="ECO:0000269" key="9">
    <source>
    </source>
</evidence>
<evidence type="ECO:0000269" key="10">
    <source>
    </source>
</evidence>
<evidence type="ECO:0000269" key="11">
    <source>
    </source>
</evidence>
<evidence type="ECO:0000269" key="12">
    <source>
    </source>
</evidence>
<evidence type="ECO:0000269" key="13">
    <source>
    </source>
</evidence>
<evidence type="ECO:0000269" key="14">
    <source>
    </source>
</evidence>
<evidence type="ECO:0000269" key="15">
    <source>
    </source>
</evidence>
<evidence type="ECO:0000269" key="16">
    <source>
    </source>
</evidence>
<evidence type="ECO:0000269" key="17">
    <source>
    </source>
</evidence>
<evidence type="ECO:0000269" key="18">
    <source>
    </source>
</evidence>
<evidence type="ECO:0000303" key="19">
    <source>
    </source>
</evidence>
<evidence type="ECO:0000305" key="20"/>
<evidence type="ECO:0000305" key="21">
    <source>
    </source>
</evidence>
<evidence type="ECO:0000305" key="22">
    <source>
    </source>
</evidence>
<evidence type="ECO:0000305" key="23">
    <source>
    </source>
</evidence>
<evidence type="ECO:0000305" key="24">
    <source>
    </source>
</evidence>
<evidence type="ECO:0000312" key="25">
    <source>
        <dbReference type="HGNC" id="HGNC:3133"/>
    </source>
</evidence>
<evidence type="ECO:0007744" key="26">
    <source>
    </source>
</evidence>
<evidence type="ECO:0007829" key="27">
    <source>
        <dbReference type="PDB" id="6OHT"/>
    </source>
</evidence>
<comment type="function">
    <text evidence="9 17 18">Isomerase that catalyzes the conversion of Delta(8)-sterols to their corresponding Delta(7)-isomers a catalytic step in the postlanosterol biosynthesis of cholesterol.</text>
</comment>
<comment type="function">
    <text evidence="10 12">Component of the microsomal antiestrogen binding site (AEBS), a multiproteic complex at the ER membrane that consists of an association between EBP and 7-dehydrocholesterol reductase/DHCR7 (PubMed:15175332, PubMed:20615952). This complex is responsible for cholesterol-5,6-epoxide hydrolase (ChEH) activity, which consists in the hydration of cholesterol-5,6-epoxides (5,6-EC) into cholestane-3beta,5alpha,6beta-triol (CT) (PubMed:20615952). The precise role of each component of this complex has not been described yet (PubMed:20615952).</text>
</comment>
<comment type="catalytic activity">
    <reaction evidence="9 17 18">
        <text>lathosterol = 5alpha-cholest-8-en-3beta-ol</text>
        <dbReference type="Rhea" id="RHEA:15281"/>
        <dbReference type="ChEBI" id="CHEBI:16608"/>
        <dbReference type="ChEBI" id="CHEBI:17168"/>
        <dbReference type="EC" id="5.3.3.5"/>
    </reaction>
    <physiologicalReaction direction="left-to-right" evidence="21 23 24">
        <dbReference type="Rhea" id="RHEA:15282"/>
    </physiologicalReaction>
</comment>
<comment type="catalytic activity">
    <reaction evidence="17 18">
        <text>zymosterol = 5alpha-cholesta-7,24-dien-3beta-ol</text>
        <dbReference type="Rhea" id="RHEA:33999"/>
        <dbReference type="ChEBI" id="CHEBI:16290"/>
        <dbReference type="ChEBI" id="CHEBI:18252"/>
    </reaction>
    <physiologicalReaction direction="left-to-right" evidence="23 24">
        <dbReference type="Rhea" id="RHEA:34000"/>
    </physiologicalReaction>
</comment>
<comment type="catalytic activity">
    <reaction evidence="12">
        <text>5,6alpha-epoxy-5alpha-cholestan-3beta-ol + H2O = 5alpha-cholestane-3beta,5,6beta-triol</text>
        <dbReference type="Rhea" id="RHEA:11964"/>
        <dbReference type="ChEBI" id="CHEBI:15377"/>
        <dbReference type="ChEBI" id="CHEBI:28082"/>
        <dbReference type="ChEBI" id="CHEBI:49305"/>
        <dbReference type="EC" id="3.3.2.11"/>
    </reaction>
    <physiologicalReaction direction="left-to-right" evidence="22">
        <dbReference type="Rhea" id="RHEA:11965"/>
    </physiologicalReaction>
</comment>
<comment type="catalytic activity">
    <reaction evidence="12">
        <text>5,6beta-epoxy-5beta-cholestan-3beta-ol + H2O = 5alpha-cholestane-3beta,5,6beta-triol</text>
        <dbReference type="Rhea" id="RHEA:15113"/>
        <dbReference type="ChEBI" id="CHEBI:15377"/>
        <dbReference type="ChEBI" id="CHEBI:28082"/>
        <dbReference type="ChEBI" id="CHEBI:28164"/>
        <dbReference type="EC" id="3.3.2.11"/>
    </reaction>
    <physiologicalReaction direction="left-to-right" evidence="22">
        <dbReference type="Rhea" id="RHEA:15114"/>
    </physiologicalReaction>
</comment>
<comment type="activity regulation">
    <text evidence="10 12">Cholestenol Delta-isomerase and cholesterol-5,6-epoxide hydrolase (ChEH) activities are inhibited by tamoxifen and the selective AEBS ligand (4-benzyl-phenoxy)-ethyl-N-pyrrolidine (PBPE) (PubMed:15175332, PubMed:20615952). ChEH activity is inhibited by oleic acid (PubMed:20615952).</text>
</comment>
<comment type="biophysicochemical properties">
    <kinetics>
        <KM evidence="12">4.47 uM for 5,6alpha-epoxy-5alpha-cholestan-3beta-ol (in the AEBS complex assay)</KM>
        <Vmax evidence="12">0.46 nmol/min/mg enzyme with 5,6alpha-epoxy-5alpha-cholestan-3beta-ol as substrate, for the formation of CT (in the AEBS complex assay)</Vmax>
    </kinetics>
</comment>
<comment type="pathway">
    <text evidence="9 17 18">Steroid biosynthesis; cholesterol biosynthesis.</text>
</comment>
<comment type="interaction">
    <interactant intactId="EBI-3915253">
        <id>Q15125</id>
    </interactant>
    <interactant intactId="EBI-348517">
        <id>O95870</id>
        <label>ABHD16A</label>
    </interactant>
    <organismsDiffer>false</organismsDiffer>
    <experiments>3</experiments>
</comment>
<comment type="interaction">
    <interactant intactId="EBI-3915253">
        <id>Q15125</id>
    </interactant>
    <interactant intactId="EBI-12109402">
        <id>Q86W74-2</id>
        <label>ANKRD46</label>
    </interactant>
    <organismsDiffer>false</organismsDiffer>
    <experiments>3</experiments>
</comment>
<comment type="interaction">
    <interactant intactId="EBI-3915253">
        <id>Q15125</id>
    </interactant>
    <interactant intactId="EBI-13059134">
        <id>Q13520</id>
        <label>AQP6</label>
    </interactant>
    <organismsDiffer>false</organismsDiffer>
    <experiments>3</experiments>
</comment>
<comment type="interaction">
    <interactant intactId="EBI-3915253">
        <id>Q15125</id>
    </interactant>
    <interactant intactId="EBI-11343438">
        <id>Q3SXY8</id>
        <label>ARL13B</label>
    </interactant>
    <organismsDiffer>false</organismsDiffer>
    <experiments>3</experiments>
</comment>
<comment type="interaction">
    <interactant intactId="EBI-3915253">
        <id>Q15125</id>
    </interactant>
    <interactant intactId="EBI-2808844">
        <id>Q8N6S5</id>
        <label>ARL6IP6</label>
    </interactant>
    <organismsDiffer>false</organismsDiffer>
    <experiments>3</experiments>
</comment>
<comment type="interaction">
    <interactant intactId="EBI-3915253">
        <id>Q15125</id>
    </interactant>
    <interactant intactId="EBI-11724186">
        <id>Q9H2C2</id>
        <label>ARV1</label>
    </interactant>
    <organismsDiffer>false</organismsDiffer>
    <experiments>3</experiments>
</comment>
<comment type="interaction">
    <interactant intactId="EBI-3915253">
        <id>Q15125</id>
    </interactant>
    <interactant intactId="EBI-12069500">
        <id>Q9HD20-3</id>
        <label>ATP13A1</label>
    </interactant>
    <organismsDiffer>false</organismsDiffer>
    <experiments>3</experiments>
</comment>
<comment type="interaction">
    <interactant intactId="EBI-3915253">
        <id>Q15125</id>
    </interactant>
    <interactant intactId="EBI-3922513">
        <id>O95393</id>
        <label>BMP10</label>
    </interactant>
    <organismsDiffer>false</organismsDiffer>
    <experiments>3</experiments>
</comment>
<comment type="interaction">
    <interactant intactId="EBI-3915253">
        <id>Q15125</id>
    </interactant>
    <interactant intactId="EBI-749464">
        <id>Q12983</id>
        <label>BNIP3</label>
    </interactant>
    <organismsDiffer>false</organismsDiffer>
    <experiments>3</experiments>
</comment>
<comment type="interaction">
    <interactant intactId="EBI-3915253">
        <id>Q15125</id>
    </interactant>
    <interactant intactId="EBI-8648738">
        <id>Q8WVV5</id>
        <label>BTN2A2</label>
    </interactant>
    <organismsDiffer>false</organismsDiffer>
    <experiments>3</experiments>
</comment>
<comment type="interaction">
    <interactant intactId="EBI-3915253">
        <id>Q15125</id>
    </interactant>
    <interactant intactId="EBI-2835920">
        <id>P06681</id>
        <label>C2</label>
    </interactant>
    <organismsDiffer>false</organismsDiffer>
    <experiments>3</experiments>
</comment>
<comment type="interaction">
    <interactant intactId="EBI-3915253">
        <id>Q15125</id>
    </interactant>
    <interactant intactId="EBI-12822627">
        <id>O14523</id>
        <label>C2CD2L</label>
    </interactant>
    <organismsDiffer>false</organismsDiffer>
    <experiments>3</experiments>
</comment>
<comment type="interaction">
    <interactant intactId="EBI-3915253">
        <id>Q15125</id>
    </interactant>
    <interactant intactId="EBI-12003442">
        <id>Q8WVX3-2</id>
        <label>C4orf3</label>
    </interactant>
    <organismsDiffer>false</organismsDiffer>
    <experiments>3</experiments>
</comment>
<comment type="interaction">
    <interactant intactId="EBI-3915253">
        <id>Q15125</id>
    </interactant>
    <interactant intactId="EBI-8558308">
        <id>P01031</id>
        <label>C5</label>
    </interactant>
    <organismsDiffer>false</organismsDiffer>
    <experiments>3</experiments>
</comment>
<comment type="interaction">
    <interactant intactId="EBI-3915253">
        <id>Q15125</id>
    </interactant>
    <interactant intactId="EBI-11986083">
        <id>Q6UWT4</id>
        <label>C5orf46</label>
    </interactant>
    <organismsDiffer>false</organismsDiffer>
    <experiments>3</experiments>
</comment>
<comment type="interaction">
    <interactant intactId="EBI-3915253">
        <id>Q15125</id>
    </interactant>
    <interactant intactId="EBI-9083477">
        <id>Q9P0B6</id>
        <label>CCDC167</label>
    </interactant>
    <organismsDiffer>false</organismsDiffer>
    <experiments>3</experiments>
</comment>
<comment type="interaction">
    <interactant intactId="EBI-3915253">
        <id>Q15125</id>
    </interactant>
    <interactant intactId="EBI-10271156">
        <id>Q8NHW4</id>
        <label>CCL4L2</label>
    </interactant>
    <organismsDiffer>false</organismsDiffer>
    <experiments>3</experiments>
</comment>
<comment type="interaction">
    <interactant intactId="EBI-3915253">
        <id>Q15125</id>
    </interactant>
    <interactant intactId="EBI-525714">
        <id>P25942</id>
        <label>CD40</label>
    </interactant>
    <organismsDiffer>false</organismsDiffer>
    <experiments>3</experiments>
</comment>
<comment type="interaction">
    <interactant intactId="EBI-3915253">
        <id>Q15125</id>
    </interactant>
    <interactant intactId="EBI-2836595">
        <id>Q07108</id>
        <label>CD69</label>
    </interactant>
    <organismsDiffer>false</organismsDiffer>
    <experiments>3</experiments>
</comment>
<comment type="interaction">
    <interactant intactId="EBI-3915253">
        <id>Q15125</id>
    </interactant>
    <interactant intactId="EBI-712921">
        <id>P60033</id>
        <label>CD81</label>
    </interactant>
    <organismsDiffer>false</organismsDiffer>
    <experiments>3</experiments>
</comment>
<comment type="interaction">
    <interactant intactId="EBI-3915253">
        <id>Q15125</id>
    </interactant>
    <interactant intactId="EBI-358858">
        <id>O14735</id>
        <label>CDIPT</label>
    </interactant>
    <organismsDiffer>false</organismsDiffer>
    <experiments>3</experiments>
</comment>
<comment type="interaction">
    <interactant intactId="EBI-3915253">
        <id>Q15125</id>
    </interactant>
    <interactant intactId="EBI-12360993">
        <id>P23141-3</id>
        <label>CES1</label>
    </interactant>
    <organismsDiffer>false</organismsDiffer>
    <experiments>3</experiments>
</comment>
<comment type="interaction">
    <interactant intactId="EBI-3915253">
        <id>Q15125</id>
    </interactant>
    <interactant intactId="EBI-17447707">
        <id>Q9H9P2</id>
        <label>CHODL</label>
    </interactant>
    <organismsDiffer>false</organismsDiffer>
    <experiments>3</experiments>
</comment>
<comment type="interaction">
    <interactant intactId="EBI-3915253">
        <id>Q15125</id>
    </interactant>
    <interactant intactId="EBI-11959453">
        <id>Q8NHS1</id>
        <label>CLDND2</label>
    </interactant>
    <organismsDiffer>false</organismsDiffer>
    <experiments>3</experiments>
</comment>
<comment type="interaction">
    <interactant intactId="EBI-3915253">
        <id>Q15125</id>
    </interactant>
    <interactant intactId="EBI-625022">
        <id>O43889-2</id>
        <label>CREB3</label>
    </interactant>
    <organismsDiffer>false</organismsDiffer>
    <experiments>3</experiments>
</comment>
<comment type="interaction">
    <interactant intactId="EBI-3915253">
        <id>Q15125</id>
    </interactant>
    <interactant intactId="EBI-6942903">
        <id>Q96BA8</id>
        <label>CREB3L1</label>
    </interactant>
    <organismsDiffer>false</organismsDiffer>
    <experiments>5</experiments>
</comment>
<comment type="interaction">
    <interactant intactId="EBI-3915253">
        <id>Q15125</id>
    </interactant>
    <interactant intactId="EBI-8646596">
        <id>P49447</id>
        <label>CYB561</label>
    </interactant>
    <organismsDiffer>false</organismsDiffer>
    <experiments>3</experiments>
</comment>
<comment type="interaction">
    <interactant intactId="EBI-3915253">
        <id>Q15125</id>
    </interactant>
    <interactant intactId="EBI-1058710">
        <id>O43169</id>
        <label>CYB5B</label>
    </interactant>
    <organismsDiffer>false</organismsDiffer>
    <experiments>3</experiments>
</comment>
<comment type="interaction">
    <interactant intactId="EBI-3915253">
        <id>Q15125</id>
    </interactant>
    <interactant intactId="EBI-1752413">
        <id>P78329</id>
        <label>CYP4F2</label>
    </interactant>
    <organismsDiffer>false</organismsDiffer>
    <experiments>3</experiments>
</comment>
<comment type="interaction">
    <interactant intactId="EBI-3915253">
        <id>Q15125</id>
    </interactant>
    <interactant intactId="EBI-12074168">
        <id>P81534</id>
        <label>DEFB103B</label>
    </interactant>
    <organismsDiffer>false</organismsDiffer>
    <experiments>3</experiments>
</comment>
<comment type="interaction">
    <interactant intactId="EBI-3915253">
        <id>Q15125</id>
    </interactant>
    <interactant intactId="EBI-10305240">
        <id>Q9H1M4</id>
        <label>DEFB127</label>
    </interactant>
    <organismsDiffer>false</organismsDiffer>
    <experiments>3</experiments>
</comment>
<comment type="interaction">
    <interactant intactId="EBI-3915253">
        <id>Q15125</id>
    </interactant>
    <interactant intactId="EBI-8639143">
        <id>Q96LL9</id>
        <label>DNAJC30</label>
    </interactant>
    <organismsDiffer>false</organismsDiffer>
    <experiments>3</experiments>
</comment>
<comment type="interaction">
    <interactant intactId="EBI-3915253">
        <id>Q15125</id>
    </interactant>
    <interactant intactId="EBI-3915253">
        <id>Q15125</id>
        <label>EBP</label>
    </interactant>
    <organismsDiffer>false</organismsDiffer>
    <experiments>3</experiments>
</comment>
<comment type="interaction">
    <interactant intactId="EBI-3915253">
        <id>Q15125</id>
    </interactant>
    <interactant intactId="EBI-2339219">
        <id>Q08426</id>
        <label>EHHADH</label>
    </interactant>
    <organismsDiffer>false</organismsDiffer>
    <experiments>3</experiments>
</comment>
<comment type="interaction">
    <interactant intactId="EBI-3915253">
        <id>Q15125</id>
    </interactant>
    <interactant intactId="EBI-2820492">
        <id>Q9BV81</id>
        <label>EMC6</label>
    </interactant>
    <organismsDiffer>false</organismsDiffer>
    <experiments>3</experiments>
</comment>
<comment type="interaction">
    <interactant intactId="EBI-3915253">
        <id>Q15125</id>
    </interactant>
    <interactant intactId="EBI-4319440">
        <id>P54849</id>
        <label>EMP1</label>
    </interactant>
    <organismsDiffer>false</organismsDiffer>
    <experiments>3</experiments>
</comment>
<comment type="interaction">
    <interactant intactId="EBI-3915253">
        <id>Q15125</id>
    </interactant>
    <interactant intactId="EBI-711490">
        <id>Q9UKR5</id>
        <label>ERG28</label>
    </interactant>
    <organismsDiffer>false</organismsDiffer>
    <experiments>3</experiments>
</comment>
<comment type="interaction">
    <interactant intactId="EBI-3915253">
        <id>Q15125</id>
    </interactant>
    <interactant intactId="EBI-781551">
        <id>Q9Y282</id>
        <label>ERGIC3</label>
    </interactant>
    <organismsDiffer>false</organismsDiffer>
    <experiments>3</experiments>
</comment>
<comment type="interaction">
    <interactant intactId="EBI-3915253">
        <id>Q15125</id>
    </interactant>
    <interactant intactId="EBI-11337888">
        <id>Q7L5A8</id>
        <label>FA2H</label>
    </interactant>
    <organismsDiffer>false</organismsDiffer>
    <experiments>3</experiments>
</comment>
<comment type="interaction">
    <interactant intactId="EBI-3915253">
        <id>Q15125</id>
    </interactant>
    <interactant intactId="EBI-18304435">
        <id>Q5JX71</id>
        <label>FAM209A</label>
    </interactant>
    <organismsDiffer>false</organismsDiffer>
    <experiments>3</experiments>
</comment>
<comment type="interaction">
    <interactant intactId="EBI-3915253">
        <id>Q15125</id>
    </interactant>
    <interactant intactId="EBI-12142299">
        <id>Q96IV6</id>
        <label>FAXDC2</label>
    </interactant>
    <organismsDiffer>false</organismsDiffer>
    <experiments>3</experiments>
</comment>
<comment type="interaction">
    <interactant intactId="EBI-3915253">
        <id>Q15125</id>
    </interactant>
    <interactant intactId="EBI-13049494">
        <id>Q9UGM5</id>
        <label>FETUB</label>
    </interactant>
    <organismsDiffer>false</organismsDiffer>
    <experiments>3</experiments>
</comment>
<comment type="interaction">
    <interactant intactId="EBI-3915253">
        <id>Q15125</id>
    </interactant>
    <interactant intactId="EBI-3385283">
        <id>Q9Y3D6</id>
        <label>FIS1</label>
    </interactant>
    <organismsDiffer>false</organismsDiffer>
    <experiments>3</experiments>
</comment>
<comment type="interaction">
    <interactant intactId="EBI-3915253">
        <id>Q15125</id>
    </interactant>
    <interactant intactId="EBI-724839">
        <id>Q14318</id>
        <label>FKBP8</label>
    </interactant>
    <organismsDiffer>false</organismsDiffer>
    <experiments>3</experiments>
</comment>
<comment type="interaction">
    <interactant intactId="EBI-3915253">
        <id>Q15125</id>
    </interactant>
    <interactant intactId="EBI-714482">
        <id>Q9BWH2</id>
        <label>FUNDC2</label>
    </interactant>
    <organismsDiffer>false</organismsDiffer>
    <experiments>3</experiments>
</comment>
<comment type="interaction">
    <interactant intactId="EBI-3915253">
        <id>Q15125</id>
    </interactant>
    <interactant intactId="EBI-12175685">
        <id>Q14802-3</id>
        <label>FXYD3</label>
    </interactant>
    <organismsDiffer>false</organismsDiffer>
    <experiments>3</experiments>
</comment>
<comment type="interaction">
    <interactant intactId="EBI-3915253">
        <id>Q15125</id>
    </interactant>
    <interactant intactId="EBI-713304">
        <id>Q9H0Q3</id>
        <label>FXYD6</label>
    </interactant>
    <organismsDiffer>false</organismsDiffer>
    <experiments>3</experiments>
</comment>
<comment type="interaction">
    <interactant intactId="EBI-3915253">
        <id>Q15125</id>
    </interactant>
    <interactant intactId="EBI-11991950">
        <id>Q8WWP7</id>
        <label>GIMAP1</label>
    </interactant>
    <organismsDiffer>false</organismsDiffer>
    <experiments>3</experiments>
</comment>
<comment type="interaction">
    <interactant intactId="EBI-3915253">
        <id>Q15125</id>
    </interactant>
    <interactant intactId="EBI-6166686">
        <id>Q96F15</id>
        <label>GIMAP5</label>
    </interactant>
    <organismsDiffer>false</organismsDiffer>
    <experiments>3</experiments>
</comment>
<comment type="interaction">
    <interactant intactId="EBI-3915253">
        <id>Q15125</id>
    </interactant>
    <interactant intactId="EBI-3905204">
        <id>P29033</id>
        <label>GJB2</label>
    </interactant>
    <organismsDiffer>false</organismsDiffer>
    <experiments>3</experiments>
</comment>
<comment type="interaction">
    <interactant intactId="EBI-3915253">
        <id>Q15125</id>
    </interactant>
    <interactant intactId="EBI-13345609">
        <id>O95452</id>
        <label>GJB6</label>
    </interactant>
    <organismsDiffer>false</organismsDiffer>
    <experiments>3</experiments>
</comment>
<comment type="interaction">
    <interactant intactId="EBI-3915253">
        <id>Q15125</id>
    </interactant>
    <interactant intactId="EBI-4401517">
        <id>O14653</id>
        <label>GOSR2</label>
    </interactant>
    <organismsDiffer>false</organismsDiffer>
    <experiments>3</experiments>
</comment>
<comment type="interaction">
    <interactant intactId="EBI-3915253">
        <id>Q15125</id>
    </interactant>
    <interactant intactId="EBI-13345167">
        <id>Q8TDT2</id>
        <label>GPR152</label>
    </interactant>
    <organismsDiffer>false</organismsDiffer>
    <experiments>3</experiments>
</comment>
<comment type="interaction">
    <interactant intactId="EBI-3915253">
        <id>Q15125</id>
    </interactant>
    <interactant intactId="EBI-702665">
        <id>P02724</id>
        <label>GYPA</label>
    </interactant>
    <organismsDiffer>false</organismsDiffer>
    <experiments>3</experiments>
</comment>
<comment type="interaction">
    <interactant intactId="EBI-3915253">
        <id>Q15125</id>
    </interactant>
    <interactant intactId="EBI-712096">
        <id>P30519</id>
        <label>HMOX2</label>
    </interactant>
    <organismsDiffer>false</organismsDiffer>
    <experiments>3</experiments>
</comment>
<comment type="interaction">
    <interactant intactId="EBI-3915253">
        <id>Q15125</id>
    </interactant>
    <interactant intactId="EBI-18053395">
        <id>Q7Z5P4</id>
        <label>HSD17B13</label>
    </interactant>
    <organismsDiffer>false</organismsDiffer>
    <experiments>3</experiments>
</comment>
<comment type="interaction">
    <interactant intactId="EBI-3915253">
        <id>Q15125</id>
    </interactant>
    <interactant intactId="EBI-725665">
        <id>Q9Y5U9</id>
        <label>IER3IP1</label>
    </interactant>
    <organismsDiffer>false</organismsDiffer>
    <experiments>3</experiments>
</comment>
<comment type="interaction">
    <interactant intactId="EBI-3915253">
        <id>Q15125</id>
    </interactant>
    <interactant intactId="EBI-8503746">
        <id>Q9Y5U4</id>
        <label>INSIG2</label>
    </interactant>
    <organismsDiffer>false</organismsDiffer>
    <experiments>3</experiments>
</comment>
<comment type="interaction">
    <interactant intactId="EBI-3915253">
        <id>Q15125</id>
    </interactant>
    <interactant intactId="EBI-10266796">
        <id>Q8N5M9</id>
        <label>JAGN1</label>
    </interactant>
    <organismsDiffer>false</organismsDiffer>
    <experiments>3</experiments>
</comment>
<comment type="interaction">
    <interactant intactId="EBI-3915253">
        <id>Q15125</id>
    </interactant>
    <interactant intactId="EBI-10173166">
        <id>Q5T700</id>
        <label>LDLRAD1</label>
    </interactant>
    <organismsDiffer>false</organismsDiffer>
    <experiments>3</experiments>
</comment>
<comment type="interaction">
    <interactant intactId="EBI-3915253">
        <id>Q15125</id>
    </interactant>
    <interactant intactId="EBI-12268900">
        <id>Q68G75</id>
        <label>LEMD1</label>
    </interactant>
    <organismsDiffer>false</organismsDiffer>
    <experiments>3</experiments>
</comment>
<comment type="interaction">
    <interactant intactId="EBI-3915253">
        <id>Q15125</id>
    </interactant>
    <interactant intactId="EBI-4280011">
        <id>Q7L5N7</id>
        <label>LPCAT2</label>
    </interactant>
    <organismsDiffer>false</organismsDiffer>
    <experiments>3</experiments>
</comment>
<comment type="interaction">
    <interactant intactId="EBI-3915253">
        <id>Q15125</id>
    </interactant>
    <interactant intactId="EBI-2830349">
        <id>Q7Z4F1</id>
        <label>LRP10</label>
    </interactant>
    <organismsDiffer>false</organismsDiffer>
    <experiments>3</experiments>
</comment>
<comment type="interaction">
    <interactant intactId="EBI-3915253">
        <id>Q15125</id>
    </interactant>
    <interactant intactId="EBI-358888">
        <id>Q96AG4</id>
        <label>LRRC59</label>
    </interactant>
    <organismsDiffer>false</organismsDiffer>
    <experiments>3</experiments>
</comment>
<comment type="interaction">
    <interactant intactId="EBI-3915253">
        <id>Q15125</id>
    </interactant>
    <interactant intactId="EBI-12241118">
        <id>Q16873</id>
        <label>LTC4S</label>
    </interactant>
    <organismsDiffer>false</organismsDiffer>
    <experiments>3</experiments>
</comment>
<comment type="interaction">
    <interactant intactId="EBI-3915253">
        <id>Q15125</id>
    </interactant>
    <interactant intactId="EBI-2858252">
        <id>Q6ZSS7</id>
        <label>MFSD6</label>
    </interactant>
    <organismsDiffer>false</organismsDiffer>
    <experiments>3</experiments>
</comment>
<comment type="interaction">
    <interactant intactId="EBI-3915253">
        <id>Q15125</id>
    </interactant>
    <interactant intactId="EBI-992788">
        <id>P50281</id>
        <label>MMP14</label>
    </interactant>
    <organismsDiffer>false</organismsDiffer>
    <experiments>3</experiments>
</comment>
<comment type="interaction">
    <interactant intactId="EBI-3915253">
        <id>Q15125</id>
    </interactant>
    <interactant intactId="EBI-12070086">
        <id>Q5J8X5</id>
        <label>MS4A13</label>
    </interactant>
    <organismsDiffer>false</organismsDiffer>
    <experiments>3</experiments>
</comment>
<comment type="interaction">
    <interactant intactId="EBI-3915253">
        <id>Q15125</id>
    </interactant>
    <interactant intactId="EBI-2863634">
        <id>Q9UHE5</id>
        <label>NAT8</label>
    </interactant>
    <organismsDiffer>false</organismsDiffer>
    <experiments>3</experiments>
</comment>
<comment type="interaction">
    <interactant intactId="EBI-3915253">
        <id>Q15125</id>
    </interactant>
    <interactant intactId="EBI-1246131">
        <id>O95167</id>
        <label>NDUFA3</label>
    </interactant>
    <organismsDiffer>false</organismsDiffer>
    <experiments>3</experiments>
</comment>
<comment type="interaction">
    <interactant intactId="EBI-3915253">
        <id>Q15125</id>
    </interactant>
    <interactant intactId="EBI-1246182">
        <id>Q9NX14</id>
        <label>NDUFB11</label>
    </interactant>
    <organismsDiffer>false</organismsDiffer>
    <experiments>3</experiments>
</comment>
<comment type="interaction">
    <interactant intactId="EBI-3915253">
        <id>Q15125</id>
    </interactant>
    <interactant intactId="EBI-721517">
        <id>Q99519</id>
        <label>NEU1</label>
    </interactant>
    <organismsDiffer>false</organismsDiffer>
    <experiments>3</experiments>
</comment>
<comment type="interaction">
    <interactant intactId="EBI-3915253">
        <id>Q15125</id>
    </interactant>
    <interactant intactId="EBI-2802124">
        <id>Q92982</id>
        <label>NINJ1</label>
    </interactant>
    <organismsDiffer>false</organismsDiffer>
    <experiments>3</experiments>
</comment>
<comment type="interaction">
    <interactant intactId="EBI-3915253">
        <id>Q15125</id>
    </interactant>
    <interactant intactId="EBI-10317425">
        <id>Q9NZG7</id>
        <label>NINJ2</label>
    </interactant>
    <organismsDiffer>false</organismsDiffer>
    <experiments>3</experiments>
</comment>
<comment type="interaction">
    <interactant intactId="EBI-3915253">
        <id>Q15125</id>
    </interactant>
    <interactant intactId="EBI-3919611">
        <id>Q16617</id>
        <label>NKG7</label>
    </interactant>
    <organismsDiffer>false</organismsDiffer>
    <experiments>3</experiments>
</comment>
<comment type="interaction">
    <interactant intactId="EBI-3915253">
        <id>Q15125</id>
    </interactant>
    <interactant intactId="EBI-10262547">
        <id>Q8IXM6</id>
        <label>NRM</label>
    </interactant>
    <organismsDiffer>false</organismsDiffer>
    <experiments>3</experiments>
</comment>
<comment type="interaction">
    <interactant intactId="EBI-3915253">
        <id>Q15125</id>
    </interactant>
    <interactant intactId="EBI-12382569">
        <id>Q2M2E3</id>
        <label>ODF4</label>
    </interactant>
    <organismsDiffer>false</organismsDiffer>
    <experiments>3</experiments>
</comment>
<comment type="interaction">
    <interactant intactId="EBI-3915253">
        <id>Q15125</id>
    </interactant>
    <interactant intactId="EBI-1054848">
        <id>Q9P0S3</id>
        <label>ORMDL1</label>
    </interactant>
    <organismsDiffer>false</organismsDiffer>
    <experiments>3</experiments>
</comment>
<comment type="interaction">
    <interactant intactId="EBI-3915253">
        <id>Q15125</id>
    </interactant>
    <interactant intactId="EBI-11075081">
        <id>Q53FV1</id>
        <label>ORMDL2</label>
    </interactant>
    <organismsDiffer>false</organismsDiffer>
    <experiments>3</experiments>
</comment>
<comment type="interaction">
    <interactant intactId="EBI-3915253">
        <id>Q15125</id>
    </interactant>
    <interactant intactId="EBI-721750">
        <id>Q8N138</id>
        <label>ORMDL3</label>
    </interactant>
    <organismsDiffer>false</organismsDiffer>
    <experiments>3</experiments>
</comment>
<comment type="interaction">
    <interactant intactId="EBI-3915253">
        <id>Q15125</id>
    </interactant>
    <interactant intactId="EBI-12853910">
        <id>Q7RTS5</id>
        <label>OTOP3</label>
    </interactant>
    <organismsDiffer>false</organismsDiffer>
    <experiments>3</experiments>
</comment>
<comment type="interaction">
    <interactant intactId="EBI-3915253">
        <id>Q15125</id>
    </interactant>
    <interactant intactId="EBI-3919291">
        <id>Q9Y342</id>
        <label>PLLP</label>
    </interactant>
    <organismsDiffer>false</organismsDiffer>
    <experiments>3</experiments>
</comment>
<comment type="interaction">
    <interactant intactId="EBI-3915253">
        <id>Q15125</id>
    </interactant>
    <interactant intactId="EBI-608347">
        <id>Q04941</id>
        <label>PLP2</label>
    </interactant>
    <organismsDiffer>false</organismsDiffer>
    <experiments>3</experiments>
</comment>
<comment type="interaction">
    <interactant intactId="EBI-3915253">
        <id>Q15125</id>
    </interactant>
    <interactant intactId="EBI-11721828">
        <id>Q8IY26</id>
        <label>PLPP6</label>
    </interactant>
    <organismsDiffer>false</organismsDiffer>
    <experiments>3</experiments>
</comment>
<comment type="interaction">
    <interactant intactId="EBI-3915253">
        <id>Q15125</id>
    </interactant>
    <interactant intactId="EBI-2845982">
        <id>Q01453</id>
        <label>PMP22</label>
    </interactant>
    <organismsDiffer>false</organismsDiffer>
    <experiments>3</experiments>
</comment>
<comment type="interaction">
    <interactant intactId="EBI-3915253">
        <id>Q15125</id>
    </interactant>
    <interactant intactId="EBI-8652812">
        <id>P54315</id>
        <label>PNLIPRP1</label>
    </interactant>
    <organismsDiffer>false</organismsDiffer>
    <experiments>3</experiments>
</comment>
<comment type="interaction">
    <interactant intactId="EBI-3915253">
        <id>Q15125</id>
    </interactant>
    <interactant intactId="EBI-742898">
        <id>P43378</id>
        <label>PTPN9</label>
    </interactant>
    <organismsDiffer>false</organismsDiffer>
    <experiments>3</experiments>
</comment>
<comment type="interaction">
    <interactant intactId="EBI-3915253">
        <id>Q15125</id>
    </interactant>
    <interactant intactId="EBI-3919694">
        <id>P15151</id>
        <label>PVR</label>
    </interactant>
    <organismsDiffer>false</organismsDiffer>
    <experiments>3</experiments>
</comment>
<comment type="interaction">
    <interactant intactId="EBI-3915253">
        <id>Q15125</id>
    </interactant>
    <interactant intactId="EBI-2129725">
        <id>Q8N8N0</id>
        <label>RNF152</label>
    </interactant>
    <organismsDiffer>false</organismsDiffer>
    <experiments>3</experiments>
</comment>
<comment type="interaction">
    <interactant intactId="EBI-3915253">
        <id>Q15125</id>
    </interactant>
    <interactant intactId="EBI-10244780">
        <id>Q5QGT7</id>
        <label>RTP2</label>
    </interactant>
    <organismsDiffer>false</organismsDiffer>
    <experiments>3</experiments>
</comment>
<comment type="interaction">
    <interactant intactId="EBI-3915253">
        <id>Q15125</id>
    </interactant>
    <interactant intactId="EBI-8636004">
        <id>Q96GQ5</id>
        <label>RUSF1</label>
    </interactant>
    <organismsDiffer>false</organismsDiffer>
    <experiments>3</experiments>
</comment>
<comment type="interaction">
    <interactant intactId="EBI-3915253">
        <id>Q15125</id>
    </interactant>
    <interactant intactId="EBI-3917235">
        <id>Q9NTJ5</id>
        <label>SACM1L</label>
    </interactant>
    <organismsDiffer>false</organismsDiffer>
    <experiments>3</experiments>
</comment>
<comment type="interaction">
    <interactant intactId="EBI-3915253">
        <id>Q15125</id>
    </interactant>
    <interactant intactId="EBI-4403649">
        <id>Q969E2</id>
        <label>SCAMP4</label>
    </interactant>
    <organismsDiffer>false</organismsDiffer>
    <experiments>3</experiments>
</comment>
<comment type="interaction">
    <interactant intactId="EBI-3915253">
        <id>Q15125</id>
    </interactant>
    <interactant intactId="EBI-1058865">
        <id>O75396</id>
        <label>SEC22B</label>
    </interactant>
    <organismsDiffer>false</organismsDiffer>
    <experiments>3</experiments>
</comment>
<comment type="interaction">
    <interactant intactId="EBI-3915253">
        <id>Q15125</id>
    </interactant>
    <interactant intactId="EBI-10329948">
        <id>Q9Y6X1</id>
        <label>SERP1</label>
    </interactant>
    <organismsDiffer>false</organismsDiffer>
    <experiments>3</experiments>
</comment>
<comment type="interaction">
    <interactant intactId="EBI-3915253">
        <id>Q15125</id>
    </interactant>
    <interactant intactId="EBI-749270">
        <id>Q8N6R1</id>
        <label>SERP2</label>
    </interactant>
    <organismsDiffer>false</organismsDiffer>
    <experiments>3</experiments>
</comment>
<comment type="interaction">
    <interactant intactId="EBI-3915253">
        <id>Q15125</id>
    </interactant>
    <interactant intactId="EBI-1171999">
        <id>Q9BWM7</id>
        <label>SFXN3</label>
    </interactant>
    <organismsDiffer>false</organismsDiffer>
    <experiments>3</experiments>
</comment>
<comment type="interaction">
    <interactant intactId="EBI-3915253">
        <id>Q15125</id>
    </interactant>
    <interactant intactId="EBI-17274136">
        <id>Q8TD22</id>
        <label>SFXN5</label>
    </interactant>
    <organismsDiffer>false</organismsDiffer>
    <experiments>3</experiments>
</comment>
<comment type="interaction">
    <interactant intactId="EBI-3915253">
        <id>Q15125</id>
    </interactant>
    <interactant intactId="EBI-10262251">
        <id>Q8IWU4</id>
        <label>SLC30A8</label>
    </interactant>
    <organismsDiffer>false</organismsDiffer>
    <experiments>3</experiments>
</comment>
<comment type="interaction">
    <interactant intactId="EBI-3915253">
        <id>Q15125</id>
    </interactant>
    <interactant intactId="EBI-12363689">
        <id>Q96G79</id>
        <label>SLC35A4</label>
    </interactant>
    <organismsDiffer>false</organismsDiffer>
    <experiments>3</experiments>
</comment>
<comment type="interaction">
    <interactant intactId="EBI-3915253">
        <id>Q15125</id>
    </interactant>
    <interactant intactId="EBI-13311257">
        <id>Q2M3R5</id>
        <label>SLC35G1</label>
    </interactant>
    <organismsDiffer>false</organismsDiffer>
    <experiments>3</experiments>
</comment>
<comment type="interaction">
    <interactant intactId="EBI-3915253">
        <id>Q15125</id>
    </interactant>
    <interactant intactId="EBI-10314552">
        <id>Q9NVC3</id>
        <label>SLC38A7</label>
    </interactant>
    <organismsDiffer>false</organismsDiffer>
    <experiments>3</experiments>
</comment>
<comment type="interaction">
    <interactant intactId="EBI-3915253">
        <id>Q15125</id>
    </interactant>
    <interactant intactId="EBI-12832276">
        <id>P08195-4</id>
        <label>SLC3A2</label>
    </interactant>
    <organismsDiffer>false</organismsDiffer>
    <experiments>3</experiments>
</comment>
<comment type="interaction">
    <interactant intactId="EBI-3915253">
        <id>Q15125</id>
    </interactant>
    <interactant intactId="EBI-10290130">
        <id>Q96JW4</id>
        <label>SLC41A2</label>
    </interactant>
    <organismsDiffer>false</organismsDiffer>
    <experiments>3</experiments>
</comment>
<comment type="interaction">
    <interactant intactId="EBI-3915253">
        <id>Q15125</id>
    </interactant>
    <interactant intactId="EBI-1222191">
        <id>Q6P1K1</id>
        <label>SLC48A1</label>
    </interactant>
    <organismsDiffer>false</organismsDiffer>
    <experiments>3</experiments>
</comment>
<comment type="interaction">
    <interactant intactId="EBI-3915253">
        <id>Q15125</id>
    </interactant>
    <interactant intactId="EBI-10226799">
        <id>Q0VAQ4</id>
        <label>SMAGP</label>
    </interactant>
    <organismsDiffer>false</organismsDiffer>
    <experiments>3</experiments>
</comment>
<comment type="interaction">
    <interactant intactId="EBI-3915253">
        <id>Q15125</id>
    </interactant>
    <interactant intactId="EBI-8640191">
        <id>Q9NRQ5</id>
        <label>SMCO4</label>
    </interactant>
    <organismsDiffer>false</organismsDiffer>
    <experiments>3</experiments>
</comment>
<comment type="interaction">
    <interactant intactId="EBI-3915253">
        <id>Q15125</id>
    </interactant>
    <interactant intactId="EBI-12188413">
        <id>B2RUZ4</id>
        <label>SMIM1</label>
    </interactant>
    <organismsDiffer>false</organismsDiffer>
    <experiments>3</experiments>
</comment>
<comment type="interaction">
    <interactant intactId="EBI-3915253">
        <id>Q15125</id>
    </interactant>
    <interactant intactId="EBI-741850">
        <id>Q9BZL3</id>
        <label>SMIM3</label>
    </interactant>
    <organismsDiffer>false</organismsDiffer>
    <experiments>3</experiments>
</comment>
<comment type="interaction">
    <interactant intactId="EBI-3915253">
        <id>Q15125</id>
    </interactant>
    <interactant intactId="EBI-11957067">
        <id>Q6UX34</id>
        <label>SNORC</label>
    </interactant>
    <organismsDiffer>false</organismsDiffer>
    <experiments>3</experiments>
</comment>
<comment type="interaction">
    <interactant intactId="EBI-3915253">
        <id>Q15125</id>
    </interactant>
    <interactant intactId="EBI-2691717">
        <id>Q86Y82</id>
        <label>STX12</label>
    </interactant>
    <organismsDiffer>false</organismsDiffer>
    <experiments>3</experiments>
</comment>
<comment type="interaction">
    <interactant intactId="EBI-3915253">
        <id>Q15125</id>
    </interactant>
    <interactant intactId="EBI-9071709">
        <id>P61266</id>
        <label>STX1B</label>
    </interactant>
    <organismsDiffer>false</organismsDiffer>
    <experiments>3</experiments>
</comment>
<comment type="interaction">
    <interactant intactId="EBI-3915253">
        <id>Q15125</id>
    </interactant>
    <interactant intactId="EBI-714206">
        <id>Q13190</id>
        <label>STX5</label>
    </interactant>
    <organismsDiffer>false</organismsDiffer>
    <experiments>3</experiments>
</comment>
<comment type="interaction">
    <interactant intactId="EBI-3915253">
        <id>Q15125</id>
    </interactant>
    <interactant intactId="EBI-2695795">
        <id>O43752</id>
        <label>STX6</label>
    </interactant>
    <organismsDiffer>false</organismsDiffer>
    <experiments>3</experiments>
</comment>
<comment type="interaction">
    <interactant intactId="EBI-3915253">
        <id>Q15125</id>
    </interactant>
    <interactant intactId="EBI-3221827">
        <id>O15400</id>
        <label>STX7</label>
    </interactant>
    <organismsDiffer>false</organismsDiffer>
    <experiments>3</experiments>
</comment>
<comment type="interaction">
    <interactant intactId="EBI-3915253">
        <id>Q15125</id>
    </interactant>
    <interactant intactId="EBI-727240">
        <id>Q9UNK0</id>
        <label>STX8</label>
    </interactant>
    <organismsDiffer>false</organismsDiffer>
    <experiments>3</experiments>
</comment>
<comment type="interaction">
    <interactant intactId="EBI-3915253">
        <id>Q15125</id>
    </interactant>
    <interactant intactId="EBI-12187159">
        <id>O43759-2</id>
        <label>SYNGR1</label>
    </interactant>
    <organismsDiffer>false</organismsDiffer>
    <experiments>3</experiments>
</comment>
<comment type="interaction">
    <interactant intactId="EBI-3915253">
        <id>Q15125</id>
    </interactant>
    <interactant intactId="EBI-1049004">
        <id>P57105</id>
        <label>SYNJ2BP</label>
    </interactant>
    <organismsDiffer>false</organismsDiffer>
    <experiments>3</experiments>
</comment>
<comment type="interaction">
    <interactant intactId="EBI-3915253">
        <id>Q15125</id>
    </interactant>
    <interactant intactId="EBI-13075176">
        <id>Q8N2H4</id>
        <label>SYS1</label>
    </interactant>
    <organismsDiffer>false</organismsDiffer>
    <experiments>3</experiments>
</comment>
<comment type="interaction">
    <interactant intactId="EBI-3915253">
        <id>Q15125</id>
    </interactant>
    <interactant intactId="EBI-9254454">
        <id>Q96BZ9</id>
        <label>TBC1D20</label>
    </interactant>
    <organismsDiffer>false</organismsDiffer>
    <experiments>3</experiments>
</comment>
<comment type="interaction">
    <interactant intactId="EBI-3915253">
        <id>Q15125</id>
    </interactant>
    <interactant intactId="EBI-941422">
        <id>P07204</id>
        <label>THBD</label>
    </interactant>
    <organismsDiffer>false</organismsDiffer>
    <experiments>3</experiments>
</comment>
<comment type="interaction">
    <interactant intactId="EBI-3915253">
        <id>Q15125</id>
    </interactant>
    <interactant intactId="EBI-1047996">
        <id>O14925</id>
        <label>TIMM23</label>
    </interactant>
    <organismsDiffer>false</organismsDiffer>
    <experiments>3</experiments>
</comment>
<comment type="interaction">
    <interactant intactId="EBI-3915253">
        <id>Q15125</id>
    </interactant>
    <interactant intactId="EBI-11337932">
        <id>Q96CP7</id>
        <label>TLCD1</label>
    </interactant>
    <organismsDiffer>false</organismsDiffer>
    <experiments>3</experiments>
</comment>
<comment type="interaction">
    <interactant intactId="EBI-3915253">
        <id>Q15125</id>
    </interactant>
    <interactant intactId="EBI-12947623">
        <id>Q96MV1</id>
        <label>TLCD4</label>
    </interactant>
    <organismsDiffer>false</organismsDiffer>
    <experiments>3</experiments>
</comment>
<comment type="interaction">
    <interactant intactId="EBI-3915253">
        <id>Q15125</id>
    </interactant>
    <interactant intactId="EBI-1045825">
        <id>P55061</id>
        <label>TMBIM6</label>
    </interactant>
    <organismsDiffer>false</organismsDiffer>
    <experiments>3</experiments>
</comment>
<comment type="interaction">
    <interactant intactId="EBI-3915253">
        <id>Q15125</id>
    </interactant>
    <interactant intactId="EBI-8644968">
        <id>Q9NV29</id>
        <label>TMEM100</label>
    </interactant>
    <organismsDiffer>false</organismsDiffer>
    <experiments>3</experiments>
</comment>
<comment type="interaction">
    <interactant intactId="EBI-3915253">
        <id>Q15125</id>
    </interactant>
    <interactant intactId="EBI-723946">
        <id>P17152</id>
        <label>TMEM11</label>
    </interactant>
    <organismsDiffer>false</organismsDiffer>
    <experiments>3</experiments>
</comment>
<comment type="interaction">
    <interactant intactId="EBI-3915253">
        <id>Q15125</id>
    </interactant>
    <interactant intactId="EBI-727322">
        <id>Q9BXJ8</id>
        <label>TMEM120A</label>
    </interactant>
    <organismsDiffer>false</organismsDiffer>
    <experiments>3</experiments>
</comment>
<comment type="interaction">
    <interactant intactId="EBI-3915253">
        <id>Q15125</id>
    </interactant>
    <interactant intactId="EBI-10171534">
        <id>A0PK00</id>
        <label>TMEM120B</label>
    </interactant>
    <organismsDiffer>false</organismsDiffer>
    <experiments>3</experiments>
</comment>
<comment type="interaction">
    <interactant intactId="EBI-3915253">
        <id>Q15125</id>
    </interactant>
    <interactant intactId="EBI-2844246">
        <id>Q9NV12</id>
        <label>TMEM140</label>
    </interactant>
    <organismsDiffer>false</organismsDiffer>
    <experiments>3</experiments>
</comment>
<comment type="interaction">
    <interactant intactId="EBI-3915253">
        <id>Q15125</id>
    </interactant>
    <interactant intactId="EBI-348587">
        <id>Q9BVK8</id>
        <label>TMEM147</label>
    </interactant>
    <organismsDiffer>false</organismsDiffer>
    <experiments>3</experiments>
</comment>
<comment type="interaction">
    <interactant intactId="EBI-3915253">
        <id>Q15125</id>
    </interactant>
    <interactant intactId="EBI-8638294">
        <id>Q9NUH8</id>
        <label>TMEM14B</label>
    </interactant>
    <organismsDiffer>false</organismsDiffer>
    <experiments>3</experiments>
</comment>
<comment type="interaction">
    <interactant intactId="EBI-3915253">
        <id>Q15125</id>
    </interactant>
    <interactant intactId="EBI-2339195">
        <id>Q9P0S9</id>
        <label>TMEM14C</label>
    </interactant>
    <organismsDiffer>false</organismsDiffer>
    <experiments>3</experiments>
</comment>
<comment type="interaction">
    <interactant intactId="EBI-3915253">
        <id>Q15125</id>
    </interactant>
    <interactant intactId="EBI-17684533">
        <id>Q9NRX6</id>
        <label>TMEM167B</label>
    </interactant>
    <organismsDiffer>false</organismsDiffer>
    <experiments>3</experiments>
</comment>
<comment type="interaction">
    <interactant intactId="EBI-3915253">
        <id>Q15125</id>
    </interactant>
    <interactant intactId="EBI-10265825">
        <id>Q8N511</id>
        <label>TMEM199</label>
    </interactant>
    <organismsDiffer>false</organismsDiffer>
    <experiments>3</experiments>
</comment>
<comment type="interaction">
    <interactant intactId="EBI-3915253">
        <id>Q15125</id>
    </interactant>
    <interactant intactId="EBI-12274070">
        <id>Q969S6</id>
        <label>TMEM203</label>
    </interactant>
    <organismsDiffer>false</organismsDiffer>
    <experiments>3</experiments>
</comment>
<comment type="interaction">
    <interactant intactId="EBI-3915253">
        <id>Q15125</id>
    </interactant>
    <interactant intactId="EBI-12876824">
        <id>Q9BTX3</id>
        <label>TMEM208</label>
    </interactant>
    <organismsDiffer>false</organismsDiffer>
    <experiments>3</experiments>
</comment>
<comment type="interaction">
    <interactant intactId="EBI-3915253">
        <id>Q15125</id>
    </interactant>
    <interactant intactId="EBI-10173151">
        <id>A2RU14</id>
        <label>TMEM218</label>
    </interactant>
    <organismsDiffer>false</organismsDiffer>
    <experiments>3</experiments>
</comment>
<comment type="interaction">
    <interactant intactId="EBI-3915253">
        <id>Q15125</id>
    </interactant>
    <interactant intactId="EBI-347385">
        <id>Q9H0R3</id>
        <label>TMEM222</label>
    </interactant>
    <organismsDiffer>false</organismsDiffer>
    <experiments>3</experiments>
</comment>
<comment type="interaction">
    <interactant intactId="EBI-3915253">
        <id>Q15125</id>
    </interactant>
    <interactant intactId="EBI-12195227">
        <id>Q8NBD8</id>
        <label>TMEM229B</label>
    </interactant>
    <organismsDiffer>false</organismsDiffer>
    <experiments>3</experiments>
</comment>
<comment type="interaction">
    <interactant intactId="EBI-3915253">
        <id>Q15125</id>
    </interactant>
    <interactant intactId="EBI-11528917">
        <id>Q8WW34-2</id>
        <label>TMEM239</label>
    </interactant>
    <organismsDiffer>false</organismsDiffer>
    <experiments>3</experiments>
</comment>
<comment type="interaction">
    <interactant intactId="EBI-3915253">
        <id>Q15125</id>
    </interactant>
    <interactant intactId="EBI-10315004">
        <id>Q9NWH2</id>
        <label>TMEM242</label>
    </interactant>
    <organismsDiffer>false</organismsDiffer>
    <experiments>3</experiments>
</comment>
<comment type="interaction">
    <interactant intactId="EBI-3915253">
        <id>Q15125</id>
    </interactant>
    <interactant intactId="EBI-12887458">
        <id>Q9BU79</id>
        <label>TMEM243</label>
    </interactant>
    <organismsDiffer>false</organismsDiffer>
    <experiments>3</experiments>
</comment>
<comment type="interaction">
    <interactant intactId="EBI-3915253">
        <id>Q15125</id>
    </interactant>
    <interactant intactId="EBI-11956809">
        <id>Q8TBM7</id>
        <label>TMEM254</label>
    </interactant>
    <organismsDiffer>false</organismsDiffer>
    <experiments>3</experiments>
</comment>
<comment type="interaction">
    <interactant intactId="EBI-3915253">
        <id>Q15125</id>
    </interactant>
    <interactant intactId="EBI-12038591">
        <id>Q69YG0</id>
        <label>TMEM42</label>
    </interactant>
    <organismsDiffer>false</organismsDiffer>
    <experiments>3</experiments>
</comment>
<comment type="interaction">
    <interactant intactId="EBI-3915253">
        <id>Q15125</id>
    </interactant>
    <interactant intactId="EBI-726044">
        <id>Q9NW97</id>
        <label>TMEM51</label>
    </interactant>
    <organismsDiffer>false</organismsDiffer>
    <experiments>3</experiments>
</comment>
<comment type="interaction">
    <interactant intactId="EBI-3915253">
        <id>Q15125</id>
    </interactant>
    <interactant intactId="EBI-2852148">
        <id>Q9H2L4</id>
        <label>TMEM60</label>
    </interactant>
    <organismsDiffer>false</organismsDiffer>
    <experiments>3</experiments>
</comment>
<comment type="interaction">
    <interactant intactId="EBI-3915253">
        <id>Q15125</id>
    </interactant>
    <interactant intactId="EBI-6656213">
        <id>Q6PI78</id>
        <label>TMEM65</label>
    </interactant>
    <organismsDiffer>false</organismsDiffer>
    <experiments>3</experiments>
</comment>
<comment type="interaction">
    <interactant intactId="EBI-3915253">
        <id>Q15125</id>
    </interactant>
    <interactant intactId="EBI-12015604">
        <id>Q8N2M4</id>
        <label>TMEM86A</label>
    </interactant>
    <organismsDiffer>false</organismsDiffer>
    <experiments>3</experiments>
</comment>
<comment type="interaction">
    <interactant intactId="EBI-3915253">
        <id>Q15125</id>
    </interactant>
    <interactant intactId="EBI-2548832">
        <id>Q8N661</id>
        <label>TMEM86B</label>
    </interactant>
    <organismsDiffer>false</organismsDiffer>
    <experiments>3</experiments>
</comment>
<comment type="interaction">
    <interactant intactId="EBI-3915253">
        <id>Q15125</id>
    </interactant>
    <interactant intactId="EBI-12111910">
        <id>Q5BJF2</id>
        <label>TMEM97</label>
    </interactant>
    <organismsDiffer>false</organismsDiffer>
    <experiments>3</experiments>
</comment>
<comment type="interaction">
    <interactant intactId="EBI-3915253">
        <id>Q15125</id>
    </interactant>
    <interactant intactId="EBI-16746122">
        <id>Q9NSU2-1</id>
        <label>TREX1</label>
    </interactant>
    <organismsDiffer>false</organismsDiffer>
    <experiments>3</experiments>
</comment>
<comment type="interaction">
    <interactant intactId="EBI-3915253">
        <id>Q15125</id>
    </interactant>
    <interactant intactId="EBI-12003468">
        <id>A0AVG3</id>
        <label>TSNARE1</label>
    </interactant>
    <organismsDiffer>false</organismsDiffer>
    <experiments>3</experiments>
</comment>
<comment type="interaction">
    <interactant intactId="EBI-3915253">
        <id>Q15125</id>
    </interactant>
    <interactant intactId="EBI-12195249">
        <id>Q5TGU0</id>
        <label>TSPO2</label>
    </interactant>
    <organismsDiffer>false</organismsDiffer>
    <experiments>3</experiments>
</comment>
<comment type="interaction">
    <interactant intactId="EBI-3915253">
        <id>Q15125</id>
    </interactant>
    <interactant intactId="EBI-11988865">
        <id>A5PKU2</id>
        <label>TUSC5</label>
    </interactant>
    <organismsDiffer>false</organismsDiffer>
    <experiments>3</experiments>
</comment>
<comment type="interaction">
    <interactant intactId="EBI-3915253">
        <id>Q15125</id>
    </interactant>
    <interactant intactId="EBI-988826">
        <id>Q9Y385</id>
        <label>UBE2J1</label>
    </interactant>
    <organismsDiffer>false</organismsDiffer>
    <experiments>3</experiments>
</comment>
<comment type="interaction">
    <interactant intactId="EBI-3915253">
        <id>Q15125</id>
    </interactant>
    <interactant intactId="EBI-2819725">
        <id>Q9Y5Z9</id>
        <label>UBIAD1</label>
    </interactant>
    <organismsDiffer>false</organismsDiffer>
    <experiments>3</experiments>
</comment>
<comment type="interaction">
    <interactant intactId="EBI-3915253">
        <id>Q15125</id>
    </interactant>
    <interactant intactId="EBI-7601760">
        <id>Q53HI1</id>
        <label>UNC50</label>
    </interactant>
    <organismsDiffer>false</organismsDiffer>
    <experiments>3</experiments>
</comment>
<comment type="interaction">
    <interactant intactId="EBI-3915253">
        <id>Q15125</id>
    </interactant>
    <interactant intactId="EBI-4401271">
        <id>Q9H1C4</id>
        <label>UNC93B1</label>
    </interactant>
    <organismsDiffer>false</organismsDiffer>
    <experiments>3</experiments>
</comment>
<comment type="interaction">
    <interactant intactId="EBI-3915253">
        <id>Q15125</id>
    </interactant>
    <interactant intactId="EBI-742842">
        <id>Q9NZ43</id>
        <label>USE1</label>
    </interactant>
    <organismsDiffer>false</organismsDiffer>
    <experiments>3</experiments>
</comment>
<comment type="interaction">
    <interactant intactId="EBI-3915253">
        <id>Q15125</id>
    </interactant>
    <interactant intactId="EBI-12097582">
        <id>P23763-3</id>
        <label>VAMP1</label>
    </interactant>
    <organismsDiffer>false</organismsDiffer>
    <experiments>3</experiments>
</comment>
<comment type="interaction">
    <interactant intactId="EBI-3915253">
        <id>Q15125</id>
    </interactant>
    <interactant intactId="EBI-520113">
        <id>P63027</id>
        <label>VAMP2</label>
    </interactant>
    <organismsDiffer>false</organismsDiffer>
    <experiments>3</experiments>
</comment>
<comment type="interaction">
    <interactant intactId="EBI-3915253">
        <id>Q15125</id>
    </interactant>
    <interactant intactId="EBI-722343">
        <id>Q15836</id>
        <label>VAMP3</label>
    </interactant>
    <organismsDiffer>false</organismsDiffer>
    <experiments>3</experiments>
</comment>
<comment type="interaction">
    <interactant intactId="EBI-3915253">
        <id>Q15125</id>
    </interactant>
    <interactant intactId="EBI-744953">
        <id>O75379</id>
        <label>VAMP4</label>
    </interactant>
    <organismsDiffer>false</organismsDiffer>
    <experiments>3</experiments>
</comment>
<comment type="interaction">
    <interactant intactId="EBI-3915253">
        <id>Q15125</id>
    </interactant>
    <interactant intactId="EBI-1059156">
        <id>Q9P0L0</id>
        <label>VAPA</label>
    </interactant>
    <organismsDiffer>false</organismsDiffer>
    <experiments>3</experiments>
</comment>
<comment type="interaction">
    <interactant intactId="EBI-3915253">
        <id>Q15125</id>
    </interactant>
    <interactant intactId="EBI-1188298">
        <id>O95292</id>
        <label>VAPB</label>
    </interactant>
    <organismsDiffer>false</organismsDiffer>
    <experiments>3</experiments>
</comment>
<comment type="interaction">
    <interactant intactId="EBI-3915253">
        <id>Q15125</id>
    </interactant>
    <interactant intactId="EBI-2799703">
        <id>O95070</id>
        <label>YIF1A</label>
    </interactant>
    <organismsDiffer>false</organismsDiffer>
    <experiments>3</experiments>
</comment>
<comment type="interaction">
    <interactant intactId="EBI-3915253">
        <id>Q15125</id>
    </interactant>
    <interactant intactId="EBI-7850136">
        <id>Q9Y548</id>
        <label>YIPF1</label>
    </interactant>
    <organismsDiffer>false</organismsDiffer>
    <experiments>3</experiments>
</comment>
<comment type="interaction">
    <interactant intactId="EBI-3915253">
        <id>Q15125</id>
    </interactant>
    <interactant intactId="EBI-751253">
        <id>Q9BSR8</id>
        <label>YIPF4</label>
    </interactant>
    <organismsDiffer>false</organismsDiffer>
    <experiments>3</experiments>
</comment>
<comment type="interaction">
    <interactant intactId="EBI-3915253">
        <id>Q15125</id>
    </interactant>
    <interactant intactId="EBI-751210">
        <id>Q96EC8</id>
        <label>YIPF6</label>
    </interactant>
    <organismsDiffer>false</organismsDiffer>
    <experiments>3</experiments>
</comment>
<comment type="interaction">
    <interactant intactId="EBI-3915253">
        <id>Q15125</id>
    </interactant>
    <interactant intactId="EBI-10254561">
        <id>Q6UX98</id>
        <label>ZDHHC24</label>
    </interactant>
    <organismsDiffer>false</organismsDiffer>
    <experiments>3</experiments>
</comment>
<comment type="interaction">
    <interactant intactId="EBI-3915253">
        <id>Q15125</id>
    </interactant>
    <interactant intactId="EBI-718439">
        <id>O95159</id>
        <label>ZFPL1</label>
    </interactant>
    <organismsDiffer>false</organismsDiffer>
    <experiments>3</experiments>
</comment>
<comment type="subcellular location">
    <subcellularLocation>
        <location evidence="5">Endoplasmic reticulum membrane</location>
        <topology evidence="20">Multi-pass membrane protein</topology>
    </subcellularLocation>
    <subcellularLocation>
        <location evidence="5">Nucleus envelope</location>
    </subcellularLocation>
    <subcellularLocation>
        <location evidence="5">Cytoplasmic vesicle</location>
    </subcellularLocation>
    <text evidence="5">During interphase, detected on the endoplasmic reticulum and the nuclear envelope. During mitosis, detected on cytoplasmic vesicles.</text>
</comment>
<comment type="disease" evidence="3 4 6 7 11 16">
    <disease id="DI-00303">
        <name>Chondrodysplasia punctata 2, X-linked dominant</name>
        <acronym>CDPX2</acronym>
        <description>A clinically and genetically heterogeneous disorder characterized by punctiform calcification of the bones. The key clinical features of CDPX2 are chondrodysplasia punctata, linear ichthyosis, cataracts and short stature. CDPX2 is a rare disorder of defective cholesterol biosynthesis, biochemically characterized by an increased amount of 8-dehydrocholesterol and cholest-8(9)-en-3-beta-ol in the plasma and tissues.</description>
        <dbReference type="MIM" id="302960"/>
    </disease>
    <text>The disease is caused by variants affecting the gene represented in this entry.</text>
</comment>
<comment type="disease" evidence="8 13 14 15">
    <disease id="DI-04527">
        <name>MEND syndrome</name>
        <acronym>MEND</acronym>
        <description>An X-linked recessive disorder associated with a defect in sterol biosynthesis. Disease manifestations and severity are highly variable. Clinical features include intellectual disability, short stature, scoliosis, digital abnormalities, cataracts, and dermatologic abnormalities.</description>
        <dbReference type="MIM" id="300960"/>
    </disease>
    <text>The disease is caused by variants affecting the gene represented in this entry.</text>
</comment>
<comment type="miscellaneous">
    <text>Binds to the phenylalkylamine calcium-ion antagonist emopamil, an anti-ischemic drug.</text>
</comment>
<comment type="similarity">
    <text evidence="20">Belongs to the EBP family.</text>
</comment>
<dbReference type="EC" id="5.3.3.5" evidence="9 17 18"/>
<dbReference type="EC" id="3.3.2.11" evidence="12"/>
<dbReference type="EMBL" id="Z37986">
    <property type="protein sequence ID" value="CAA86068.1"/>
    <property type="molecule type" value="mRNA"/>
</dbReference>
<dbReference type="EMBL" id="CR456815">
    <property type="protein sequence ID" value="CAG33096.1"/>
    <property type="molecule type" value="mRNA"/>
</dbReference>
<dbReference type="EMBL" id="CR542094">
    <property type="protein sequence ID" value="CAG46891.1"/>
    <property type="molecule type" value="mRNA"/>
</dbReference>
<dbReference type="EMBL" id="AF196969">
    <property type="status" value="NOT_ANNOTATED_CDS"/>
    <property type="molecule type" value="Genomic_DNA"/>
</dbReference>
<dbReference type="EMBL" id="AF196972">
    <property type="status" value="NOT_ANNOTATED_CDS"/>
    <property type="molecule type" value="Genomic_DNA"/>
</dbReference>
<dbReference type="EMBL" id="CH471224">
    <property type="protein sequence ID" value="EAW50773.1"/>
    <property type="molecule type" value="Genomic_DNA"/>
</dbReference>
<dbReference type="EMBL" id="BC001549">
    <property type="protein sequence ID" value="AAH01549.1"/>
    <property type="molecule type" value="mRNA"/>
</dbReference>
<dbReference type="EMBL" id="BC001572">
    <property type="protein sequence ID" value="AAH01572.1"/>
    <property type="molecule type" value="mRNA"/>
</dbReference>
<dbReference type="EMBL" id="BC046501">
    <property type="protein sequence ID" value="AAH46501.1"/>
    <property type="molecule type" value="mRNA"/>
</dbReference>
<dbReference type="CCDS" id="CCDS14300.1"/>
<dbReference type="PIR" id="B56122">
    <property type="entry name" value="B56122"/>
</dbReference>
<dbReference type="RefSeq" id="NP_006570.1">
    <property type="nucleotide sequence ID" value="NM_006579.3"/>
</dbReference>
<dbReference type="PDB" id="6OHT">
    <property type="method" value="X-ray"/>
    <property type="resolution" value="3.20 A"/>
    <property type="chains" value="A/B/C=2-230"/>
</dbReference>
<dbReference type="PDB" id="6OHU">
    <property type="method" value="X-ray"/>
    <property type="resolution" value="3.53 A"/>
    <property type="chains" value="A/B/C=2-230"/>
</dbReference>
<dbReference type="PDB" id="8W0R">
    <property type="method" value="EM"/>
    <property type="resolution" value="2.80 A"/>
    <property type="chains" value="A/B=2-230"/>
</dbReference>
<dbReference type="PDB" id="8W0S">
    <property type="method" value="EM"/>
    <property type="resolution" value="2.80 A"/>
    <property type="chains" value="A/B=2-230"/>
</dbReference>
<dbReference type="PDBsum" id="6OHT"/>
<dbReference type="PDBsum" id="6OHU"/>
<dbReference type="PDBsum" id="8W0R"/>
<dbReference type="PDBsum" id="8W0S"/>
<dbReference type="EMDB" id="EMD-43712"/>
<dbReference type="EMDB" id="EMD-43713"/>
<dbReference type="SMR" id="Q15125"/>
<dbReference type="BioGRID" id="115921">
    <property type="interactions" value="262"/>
</dbReference>
<dbReference type="FunCoup" id="Q15125">
    <property type="interactions" value="437"/>
</dbReference>
<dbReference type="IntAct" id="Q15125">
    <property type="interactions" value="224"/>
</dbReference>
<dbReference type="STRING" id="9606.ENSP00000417052"/>
<dbReference type="BindingDB" id="Q15125"/>
<dbReference type="ChEMBL" id="CHEMBL4931"/>
<dbReference type="DrugBank" id="DB05792">
    <property type="generic name" value="Arylacenamide"/>
</dbReference>
<dbReference type="DrugBank" id="DB00675">
    <property type="generic name" value="Tamoxifen"/>
</dbReference>
<dbReference type="DrugCentral" id="Q15125"/>
<dbReference type="SwissLipids" id="SLP:000001209"/>
<dbReference type="GlyCosmos" id="Q15125">
    <property type="glycosylation" value="1 site, 1 glycan"/>
</dbReference>
<dbReference type="GlyGen" id="Q15125">
    <property type="glycosylation" value="4 sites, 2 O-linked glycans (3 sites)"/>
</dbReference>
<dbReference type="iPTMnet" id="Q15125"/>
<dbReference type="PhosphoSitePlus" id="Q15125"/>
<dbReference type="SwissPalm" id="Q15125"/>
<dbReference type="BioMuta" id="EBP"/>
<dbReference type="DMDM" id="17374795"/>
<dbReference type="jPOST" id="Q15125"/>
<dbReference type="MassIVE" id="Q15125"/>
<dbReference type="PaxDb" id="9606-ENSP00000417052"/>
<dbReference type="PeptideAtlas" id="Q15125"/>
<dbReference type="ProteomicsDB" id="60452"/>
<dbReference type="Pumba" id="Q15125"/>
<dbReference type="TopDownProteomics" id="Q15125"/>
<dbReference type="Antibodypedia" id="525">
    <property type="antibodies" value="169 antibodies from 23 providers"/>
</dbReference>
<dbReference type="DNASU" id="10682"/>
<dbReference type="Ensembl" id="ENST00000495186.6">
    <property type="protein sequence ID" value="ENSP00000417052.1"/>
    <property type="gene ID" value="ENSG00000147155.11"/>
</dbReference>
<dbReference type="GeneID" id="10682"/>
<dbReference type="KEGG" id="hsa:10682"/>
<dbReference type="MANE-Select" id="ENST00000495186.6">
    <property type="protein sequence ID" value="ENSP00000417052.1"/>
    <property type="RefSeq nucleotide sequence ID" value="NM_006579.3"/>
    <property type="RefSeq protein sequence ID" value="NP_006570.1"/>
</dbReference>
<dbReference type="UCSC" id="uc004djx.5">
    <property type="organism name" value="human"/>
</dbReference>
<dbReference type="AGR" id="HGNC:3133"/>
<dbReference type="CTD" id="10682"/>
<dbReference type="DisGeNET" id="10682"/>
<dbReference type="GeneCards" id="EBP"/>
<dbReference type="GeneReviews" id="EBP"/>
<dbReference type="HGNC" id="HGNC:3133">
    <property type="gene designation" value="EBP"/>
</dbReference>
<dbReference type="HPA" id="ENSG00000147155">
    <property type="expression patterns" value="Tissue enhanced (liver)"/>
</dbReference>
<dbReference type="MalaCards" id="EBP"/>
<dbReference type="MIM" id="300205">
    <property type="type" value="gene"/>
</dbReference>
<dbReference type="MIM" id="300960">
    <property type="type" value="phenotype"/>
</dbReference>
<dbReference type="MIM" id="302960">
    <property type="type" value="phenotype"/>
</dbReference>
<dbReference type="neXtProt" id="NX_Q15125"/>
<dbReference type="OpenTargets" id="ENSG00000147155"/>
<dbReference type="Orphanet" id="401973">
    <property type="disease" value="MEND syndrome"/>
</dbReference>
<dbReference type="Orphanet" id="35173">
    <property type="disease" value="X-linked dominant chondrodysplasia punctata"/>
</dbReference>
<dbReference type="PharmGKB" id="PA27587"/>
<dbReference type="VEuPathDB" id="HostDB:ENSG00000147155"/>
<dbReference type="eggNOG" id="KOG4826">
    <property type="taxonomic scope" value="Eukaryota"/>
</dbReference>
<dbReference type="GeneTree" id="ENSGT00530000063715"/>
<dbReference type="HOGENOM" id="CLU_072128_0_0_1"/>
<dbReference type="InParanoid" id="Q15125"/>
<dbReference type="OMA" id="VIEGWFC"/>
<dbReference type="OrthoDB" id="58557at2759"/>
<dbReference type="PAN-GO" id="Q15125">
    <property type="GO annotations" value="4 GO annotations based on evolutionary models"/>
</dbReference>
<dbReference type="PhylomeDB" id="Q15125"/>
<dbReference type="TreeFam" id="TF314716"/>
<dbReference type="BioCyc" id="MetaCyc:ENSG00000147155-MONOMER"/>
<dbReference type="BRENDA" id="5.3.3.5">
    <property type="organism ID" value="2681"/>
</dbReference>
<dbReference type="PathwayCommons" id="Q15125"/>
<dbReference type="Reactome" id="R-HSA-6807047">
    <property type="pathway name" value="Cholesterol biosynthesis via desmosterol"/>
</dbReference>
<dbReference type="Reactome" id="R-HSA-6807062">
    <property type="pathway name" value="Cholesterol biosynthesis via lathosterol"/>
</dbReference>
<dbReference type="SABIO-RK" id="Q15125"/>
<dbReference type="SignaLink" id="Q15125"/>
<dbReference type="UniPathway" id="UPA00063"/>
<dbReference type="BioGRID-ORCS" id="10682">
    <property type="hits" value="13 hits in 794 CRISPR screens"/>
</dbReference>
<dbReference type="ChiTaRS" id="EBP">
    <property type="organism name" value="human"/>
</dbReference>
<dbReference type="GenomeRNAi" id="10682"/>
<dbReference type="Pharos" id="Q15125">
    <property type="development level" value="Tchem"/>
</dbReference>
<dbReference type="PRO" id="PR:Q15125"/>
<dbReference type="Proteomes" id="UP000005640">
    <property type="component" value="Chromosome X"/>
</dbReference>
<dbReference type="RNAct" id="Q15125">
    <property type="molecule type" value="protein"/>
</dbReference>
<dbReference type="Bgee" id="ENSG00000147155">
    <property type="expression patterns" value="Expressed in right lobe of liver and 205 other cell types or tissues"/>
</dbReference>
<dbReference type="ExpressionAtlas" id="Q15125">
    <property type="expression patterns" value="baseline and differential"/>
</dbReference>
<dbReference type="GO" id="GO:0031410">
    <property type="term" value="C:cytoplasmic vesicle"/>
    <property type="evidence" value="ECO:0007669"/>
    <property type="project" value="UniProtKB-KW"/>
</dbReference>
<dbReference type="GO" id="GO:0005783">
    <property type="term" value="C:endoplasmic reticulum"/>
    <property type="evidence" value="ECO:0000314"/>
    <property type="project" value="UniProtKB"/>
</dbReference>
<dbReference type="GO" id="GO:0005789">
    <property type="term" value="C:endoplasmic reticulum membrane"/>
    <property type="evidence" value="ECO:0000314"/>
    <property type="project" value="UniProt"/>
</dbReference>
<dbReference type="GO" id="GO:0005635">
    <property type="term" value="C:nuclear envelope"/>
    <property type="evidence" value="ECO:0000314"/>
    <property type="project" value="UniProtKB"/>
</dbReference>
<dbReference type="GO" id="GO:0031965">
    <property type="term" value="C:nuclear membrane"/>
    <property type="evidence" value="ECO:0000314"/>
    <property type="project" value="HPA"/>
</dbReference>
<dbReference type="GO" id="GO:0000247">
    <property type="term" value="F:C-8 sterol isomerase activity"/>
    <property type="evidence" value="ECO:0000250"/>
    <property type="project" value="UniProtKB"/>
</dbReference>
<dbReference type="GO" id="GO:0047750">
    <property type="term" value="F:cholestenol delta-isomerase activity"/>
    <property type="evidence" value="ECO:0007669"/>
    <property type="project" value="UniProtKB-EC"/>
</dbReference>
<dbReference type="GO" id="GO:0033963">
    <property type="term" value="F:cholesterol-5,6-oxide hydrolase activity"/>
    <property type="evidence" value="ECO:0000315"/>
    <property type="project" value="UniProtKB"/>
</dbReference>
<dbReference type="GO" id="GO:0042802">
    <property type="term" value="F:identical protein binding"/>
    <property type="evidence" value="ECO:0000353"/>
    <property type="project" value="IntAct"/>
</dbReference>
<dbReference type="GO" id="GO:0004769">
    <property type="term" value="F:steroid Delta-isomerase activity"/>
    <property type="evidence" value="ECO:0000314"/>
    <property type="project" value="UniProtKB"/>
</dbReference>
<dbReference type="GO" id="GO:0006695">
    <property type="term" value="P:cholesterol biosynthetic process"/>
    <property type="evidence" value="ECO:0000314"/>
    <property type="project" value="UniProtKB"/>
</dbReference>
<dbReference type="GO" id="GO:0033489">
    <property type="term" value="P:cholesterol biosynthetic process via desmosterol"/>
    <property type="evidence" value="ECO:0000304"/>
    <property type="project" value="Reactome"/>
</dbReference>
<dbReference type="GO" id="GO:0033490">
    <property type="term" value="P:cholesterol biosynthetic process via lathosterol"/>
    <property type="evidence" value="ECO:0000304"/>
    <property type="project" value="Reactome"/>
</dbReference>
<dbReference type="GO" id="GO:0008203">
    <property type="term" value="P:cholesterol metabolic process"/>
    <property type="evidence" value="ECO:0000315"/>
    <property type="project" value="GO_Central"/>
</dbReference>
<dbReference type="GO" id="GO:0030097">
    <property type="term" value="P:hemopoiesis"/>
    <property type="evidence" value="ECO:0007669"/>
    <property type="project" value="Ensembl"/>
</dbReference>
<dbReference type="GO" id="GO:0043931">
    <property type="term" value="P:ossification involved in bone maturation"/>
    <property type="evidence" value="ECO:0000315"/>
    <property type="project" value="GO_Central"/>
</dbReference>
<dbReference type="InterPro" id="IPR007905">
    <property type="entry name" value="EBP"/>
</dbReference>
<dbReference type="InterPro" id="IPR033118">
    <property type="entry name" value="EXPERA"/>
</dbReference>
<dbReference type="PANTHER" id="PTHR14207:SF0">
    <property type="entry name" value="3-BETA-HYDROXYSTEROID-DELTA(8),DELTA(7)-ISOMERASE"/>
    <property type="match status" value="1"/>
</dbReference>
<dbReference type="PANTHER" id="PTHR14207">
    <property type="entry name" value="STEROL ISOMERASE"/>
    <property type="match status" value="1"/>
</dbReference>
<dbReference type="Pfam" id="PF05241">
    <property type="entry name" value="EBP"/>
    <property type="match status" value="1"/>
</dbReference>
<dbReference type="PROSITE" id="PS51751">
    <property type="entry name" value="EXPERA"/>
    <property type="match status" value="1"/>
</dbReference>
<feature type="initiator methionine" description="Removed" evidence="26">
    <location>
        <position position="1"/>
    </location>
</feature>
<feature type="chain" id="PRO_0000174342" description="3-beta-hydroxysteroid-Delta(8),Delta(7)-isomerase">
    <location>
        <begin position="2"/>
        <end position="230"/>
    </location>
</feature>
<feature type="transmembrane region" description="Helical" evidence="1">
    <location>
        <begin position="29"/>
        <end position="49"/>
    </location>
</feature>
<feature type="transmembrane region" description="Helical" evidence="1">
    <location>
        <begin position="66"/>
        <end position="86"/>
    </location>
</feature>
<feature type="transmembrane region" description="Helical" evidence="1">
    <location>
        <begin position="121"/>
        <end position="141"/>
    </location>
</feature>
<feature type="transmembrane region" description="Helical" evidence="1">
    <location>
        <begin position="185"/>
        <end position="205"/>
    </location>
</feature>
<feature type="domain" description="EXPERA" evidence="2">
    <location>
        <begin position="61"/>
        <end position="204"/>
    </location>
</feature>
<feature type="modified residue" description="N-acetylthreonine" evidence="26">
    <location>
        <position position="2"/>
    </location>
</feature>
<feature type="sequence variant" id="VAR_074633" description="In MEND; patients have mildly increased concentrations of plasma 8(9)-cholestenol and 8-dehydrocholesterol; probable hypomorphic mutation; dbSNP:rs104894795." evidence="8">
    <original>L</original>
    <variation>P</variation>
    <location>
        <position position="18"/>
    </location>
</feature>
<feature type="sequence variant" id="VAR_074634" description="In MEND; patients have increased concentrations of plasma 8(9)-cholestenol, 8-dehydrocholesterol and 7-dehydrocholesterol; probable hypomorphic mutation; dbSNP:rs587783599." evidence="13">
    <original>W</original>
    <variation>C</variation>
    <location>
        <position position="47"/>
    </location>
</feature>
<feature type="sequence variant" id="VAR_074635" description="In MEND; patients have increased concentrations of plasma 8-dehydrocholesterol and 8(9)-cholestenol; probable hypomorphic mutation; dbSNP:rs878854359." evidence="14">
    <original>W</original>
    <variation>R</variation>
    <location>
        <position position="47"/>
    </location>
</feature>
<feature type="sequence variant" id="VAR_074636" description="In MEND; patients have increased plasma levels of 8(9)-cholestenol; probable hypomorphic mutation; dbSNP:rs797045153." evidence="15">
    <original>I</original>
    <variation>N</variation>
    <location>
        <position position="75"/>
    </location>
</feature>
<feature type="sequence variant" id="VAR_012105" description="In CDPX2; dbSNP:rs104894800." evidence="4">
    <original>E</original>
    <variation>K</variation>
    <location>
        <position position="80"/>
    </location>
</feature>
<feature type="sequence variant" id="VAR_074637" description="In CDPX2." evidence="11">
    <original>E</original>
    <variation>K</variation>
    <location>
        <position position="103"/>
    </location>
</feature>
<feature type="sequence variant" id="VAR_012106" description="In CDPX2; dbSNP:rs1602090481." evidence="3">
    <original>R</original>
    <variation>Q</variation>
    <location>
        <position position="110"/>
    </location>
</feature>
<feature type="sequence variant" id="VAR_012107" description="In CDPX2." evidence="7">
    <original>R</original>
    <variation>G</variation>
    <location>
        <position position="147"/>
    </location>
</feature>
<feature type="sequence variant" id="VAR_012108" description="In CDPX2; dbSNP:rs28935174." evidence="4 6 16">
    <original>R</original>
    <variation>H</variation>
    <location>
        <position position="147"/>
    </location>
</feature>
<feature type="mutagenesis site" description="Reduces catalytic activity to less than 35% of wild-type." evidence="18">
    <original>W</original>
    <variation>A</variation>
    <location>
        <position position="68"/>
    </location>
</feature>
<feature type="mutagenesis site" description="Reduces catalytic activity to less than 35% of wild-type." evidence="18">
    <original>I</original>
    <variation>A</variation>
    <location>
        <position position="75"/>
    </location>
</feature>
<feature type="mutagenesis site" description="Reduces catalytic activity to less than 10% of wild-type." evidence="18">
    <original>H</original>
    <variation>A</variation>
    <location>
        <position position="76"/>
    </location>
</feature>
<feature type="mutagenesis site" description="Reduces catalytic activity to less than 10% of wild-type." evidence="18">
    <original>E</original>
    <variation>A</variation>
    <location>
        <position position="80"/>
    </location>
</feature>
<feature type="mutagenesis site" description="Reduces catalytic activity to less than 2% of wild-type." evidence="9">
    <original>Y</original>
    <variation>W</variation>
    <location>
        <position position="111"/>
    </location>
</feature>
<feature type="mutagenesis site" description="Reduces catalytic activity to less than 35% of wild-type." evidence="9">
    <original>M</original>
    <variation>A</variation>
    <location>
        <position position="121"/>
    </location>
</feature>
<feature type="mutagenesis site" description="No effect on catalytic activity." evidence="9">
    <original>M</original>
    <variation>V</variation>
    <location>
        <position position="121"/>
    </location>
</feature>
<feature type="mutagenesis site" description="Reduces catalytic activity to less than 10% of wild-type." evidence="18">
    <original>E</original>
    <variation>A</variation>
    <location>
        <position position="122"/>
    </location>
</feature>
<feature type="mutagenesis site" description="Reduces catalytic activity to less than 10% of wild-type." evidence="18">
    <original>T</original>
    <variation>A</variation>
    <location>
        <position position="125"/>
    </location>
</feature>
<feature type="mutagenesis site" description="Reduces catalytic activity to less than 35% of wild-type." evidence="18">
    <original>Y</original>
    <variation>A</variation>
    <location>
        <position position="188"/>
    </location>
</feature>
<feature type="mutagenesis site" description="Reduces catalytic activity to less than 35% of wild-type." evidence="9">
    <original>F</original>
    <variation>A</variation>
    <location>
        <position position="189"/>
    </location>
</feature>
<feature type="mutagenesis site" description="No effect on catalytic activity." evidence="9">
    <original>F</original>
    <variation>L</variation>
    <location>
        <position position="189"/>
    </location>
</feature>
<feature type="mutagenesis site" description="Reduces catalytic activity to less than 10% of wild-type." evidence="18">
    <original>N</original>
    <variation>A</variation>
    <location>
        <position position="193"/>
    </location>
</feature>
<feature type="mutagenesis site" description="Reduces catalytic activity to less than 10% of wild-type." evidence="18">
    <original>W</original>
    <variation>A</variation>
    <location>
        <position position="196"/>
    </location>
</feature>
<feature type="sequence conflict" description="In Ref. 2; CAG33096." evidence="20" ref="2">
    <original>FY</original>
    <variation>IF</variation>
    <location>
        <begin position="187"/>
        <end position="188"/>
    </location>
</feature>
<feature type="helix" evidence="27">
    <location>
        <begin position="28"/>
        <end position="51"/>
    </location>
</feature>
<feature type="helix" evidence="27">
    <location>
        <begin position="61"/>
        <end position="85"/>
    </location>
</feature>
<feature type="strand" evidence="27">
    <location>
        <begin position="86"/>
        <end position="88"/>
    </location>
</feature>
<feature type="helix" evidence="27">
    <location>
        <begin position="96"/>
        <end position="106"/>
    </location>
</feature>
<feature type="strand" evidence="27">
    <location>
        <begin position="107"/>
        <end position="109"/>
    </location>
</feature>
<feature type="turn" evidence="27">
    <location>
        <begin position="111"/>
        <end position="114"/>
    </location>
</feature>
<feature type="helix" evidence="27">
    <location>
        <begin position="116"/>
        <end position="127"/>
    </location>
</feature>
<feature type="helix" evidence="27">
    <location>
        <begin position="129"/>
        <end position="139"/>
    </location>
</feature>
<feature type="turn" evidence="27">
    <location>
        <begin position="140"/>
        <end position="143"/>
    </location>
</feature>
<feature type="helix" evidence="27">
    <location>
        <begin position="146"/>
        <end position="171"/>
    </location>
</feature>
<feature type="turn" evidence="27">
    <location>
        <begin position="172"/>
        <end position="174"/>
    </location>
</feature>
<feature type="helix" evidence="27">
    <location>
        <begin position="182"/>
        <end position="189"/>
    </location>
</feature>
<feature type="helix" evidence="27">
    <location>
        <begin position="190"/>
        <end position="215"/>
    </location>
</feature>
<sequence length="230" mass="26353">MTTNAGPLHPYWPQHLRLDNFVPNDRPTWHILAGLFSVTGVLVVTTWLLSGRAAVVPLGTWRRLSLCWFAVCGFIHLVIEGWFVLYYEDLLGDQAFLSQLWKEYAKGDSRYILGDNFTVCMETITACLWGPLSLWVVIAFLRQHPLRFILQLVVSVGQIYGDVLYFLTEHRDGFQHGELGHPLYFWFYFVFMNALWLVLPGVLVLDAVKHLTHAQSTLDAKATKAKSKKN</sequence>
<proteinExistence type="evidence at protein level"/>
<protein>
    <recommendedName>
        <fullName evidence="20">3-beta-hydroxysteroid-Delta(8),Delta(7)-isomerase</fullName>
        <ecNumber evidence="9 17 18">5.3.3.5</ecNumber>
    </recommendedName>
    <alternativeName>
        <fullName>Cholestenol Delta-isomerase</fullName>
    </alternativeName>
    <alternativeName>
        <fullName evidence="19">Cholesterol-5,6-epoxide hydrolase subunit EBP</fullName>
        <ecNumber evidence="12">3.3.2.11</ecNumber>
    </alternativeName>
    <alternativeName>
        <fullName>Delta(8)-Delta(7) sterol isomerase</fullName>
        <shortName>D8-D7 sterol isomerase</shortName>
    </alternativeName>
    <alternativeName>
        <fullName>Emopamil-binding protein</fullName>
    </alternativeName>
</protein>
<keyword id="KW-0002">3D-structure</keyword>
<keyword id="KW-0007">Acetylation</keyword>
<keyword id="KW-0898">Cataract</keyword>
<keyword id="KW-0152">Cholesterol biosynthesis</keyword>
<keyword id="KW-0153">Cholesterol metabolism</keyword>
<keyword id="KW-0968">Cytoplasmic vesicle</keyword>
<keyword id="KW-0225">Disease variant</keyword>
<keyword id="KW-0242">Dwarfism</keyword>
<keyword id="KW-0256">Endoplasmic reticulum</keyword>
<keyword id="KW-0378">Hydrolase</keyword>
<keyword id="KW-0977">Ichthyosis</keyword>
<keyword id="KW-0413">Isomerase</keyword>
<keyword id="KW-0444">Lipid biosynthesis</keyword>
<keyword id="KW-0443">Lipid metabolism</keyword>
<keyword id="KW-0472">Membrane</keyword>
<keyword id="KW-0539">Nucleus</keyword>
<keyword id="KW-1267">Proteomics identification</keyword>
<keyword id="KW-1185">Reference proteome</keyword>
<keyword id="KW-0752">Steroid biosynthesis</keyword>
<keyword id="KW-0753">Steroid metabolism</keyword>
<keyword id="KW-0756">Sterol biosynthesis</keyword>
<keyword id="KW-1207">Sterol metabolism</keyword>
<keyword id="KW-0812">Transmembrane</keyword>
<keyword id="KW-1133">Transmembrane helix</keyword>
<accession>Q15125</accession>
<accession>Q6FGL3</accession>
<accession>Q6IBI9</accession>